<keyword id="KW-0002">3D-structure</keyword>
<keyword id="KW-0007">Acetylation</keyword>
<keyword id="KW-0010">Activator</keyword>
<keyword id="KW-0025">Alternative splicing</keyword>
<keyword id="KW-0067">ATP-binding</keyword>
<keyword id="KW-0131">Cell cycle</keyword>
<keyword id="KW-0132">Cell division</keyword>
<keyword id="KW-0156">Chromatin regulator</keyword>
<keyword id="KW-0963">Cytoplasm</keyword>
<keyword id="KW-0206">Cytoskeleton</keyword>
<keyword id="KW-0903">Direct protein sequencing</keyword>
<keyword id="KW-0227">DNA damage</keyword>
<keyword id="KW-0233">DNA recombination</keyword>
<keyword id="KW-0234">DNA repair</keyword>
<keyword id="KW-0341">Growth regulation</keyword>
<keyword id="KW-0347">Helicase</keyword>
<keyword id="KW-0378">Hydrolase</keyword>
<keyword id="KW-1017">Isopeptide bond</keyword>
<keyword id="KW-0472">Membrane</keyword>
<keyword id="KW-0498">Mitosis</keyword>
<keyword id="KW-0547">Nucleotide-binding</keyword>
<keyword id="KW-0539">Nucleus</keyword>
<keyword id="KW-1267">Proteomics identification</keyword>
<keyword id="KW-1185">Reference proteome</keyword>
<keyword id="KW-0804">Transcription</keyword>
<keyword id="KW-0805">Transcription regulation</keyword>
<keyword id="KW-0832">Ubl conjugation</keyword>
<gene>
    <name evidence="37" type="primary">RUVBL1</name>
    <name type="synonym">INO80H</name>
    <name type="synonym">NMP238</name>
    <name type="synonym">TIP49</name>
    <name type="synonym">TIP49A</name>
</gene>
<comment type="function">
    <text evidence="4 6 9 11 13 14 16 23 25 31">Possesses single-stranded DNA-stimulated ATPase and ATP-dependent DNA helicase (3' to 5') activity; hexamerization is thought to be critical for ATP hydrolysis and adjacent subunits in the ring-like structure contribute to the ATPase activity (PubMed:17157868, PubMed:33205750). Component of the NuA4 histone acetyltransferase complex which is involved in transcriptional activation of select genes principally by acetylation of nucleosomal histones H4 and H2A (PubMed:14966270). This modification may both alter nucleosome-DNA interactions and promote interaction of the modified histones with other proteins which positively regulate transcription (PubMed:14966270). This complex may be required for the activation of transcriptional programs associated with oncogene and proto-oncogene mediated growth induction, tumor suppressor mediated growth arrest and replicative senescence, apoptosis, and DNA repair (PubMed:14966270). The NuA4 complex ATPase and helicase activities seem to be, at least in part, contributed by the association of RUVBL1 and RUVBL2 with EP400. NuA4 may also play a direct role in DNA repair when recruited to sites of DNA damage (PubMed:14966270). Component of a SWR1-like complex that specifically mediates the removal of histone H2A.Z/H2AZ1 from the nucleosome (PubMed:24463511). Proposed core component of the chromatin remodeling INO80 complex which exhibits DNA- and nucleosome-activated ATPase activity and catalyzes ATP-dependent nucleosome sliding (PubMed:16230350, PubMed:21303910). Plays an essential role in oncogenic transformation by MYC and also modulates transcriptional activation by the LEF1/TCF1-CTNNB1 complex (PubMed:10882073, PubMed:16014379). Essential for cell proliferation (PubMed:14506706). May be able to bind plasminogen at cell surface and enhance plasminogen activation (PubMed:11027681).</text>
</comment>
<comment type="catalytic activity">
    <reaction evidence="16">
        <text>ATP + H2O = ADP + phosphate + H(+)</text>
        <dbReference type="Rhea" id="RHEA:13065"/>
        <dbReference type="ChEBI" id="CHEBI:15377"/>
        <dbReference type="ChEBI" id="CHEBI:15378"/>
        <dbReference type="ChEBI" id="CHEBI:30616"/>
        <dbReference type="ChEBI" id="CHEBI:43474"/>
        <dbReference type="ChEBI" id="CHEBI:456216"/>
        <dbReference type="EC" id="3.6.4.12"/>
    </reaction>
    <physiologicalReaction direction="left-to-right" evidence="36">
        <dbReference type="Rhea" id="RHEA:13066"/>
    </physiologicalReaction>
</comment>
<comment type="subunit">
    <text evidence="3 4 5 7 8 9 11 12 13 14 15 16 17 18 19 20 21 22 23 24 25 26 27 28 30 31 32 33">Forms homohexameric rings (PubMed:33205750). Can form a dodecamer with RUVBL2 made of two stacked hexameric rings; however, even though RUVBL1 and RUVBL2 are present in equimolar ratio, the oligomeric status of each hexamer is not known (PubMed:33205750). Oligomerization may regulate binding to nucleic acids and conversely, binding to nucleic acids may affect the dodecameric assembly. Interaction of the complex with DHX34 results in conformational changes of the N-terminus of the RUVBL2 subunits, resulting in loss of nucleotide binding ability and ATP hydrolysis of the complex (PubMed:33205750). Interacts with the transcriptional activation domain of MYC. Component of the RNA polymerase II holoenzyme complex. May also act to bridge the LEF1/TCF1-CTNNB1 complex and TBP. Component of the NuA4 histone acetyltransferase complex which contains the catalytic subunit KAT5/TIP60 and the subunits EP400, TRRAP/PAF400, BRD8/SMAP, EPC1, DMAP1/DNMAP1, RUVBL1/TIP49, RUVBL2, ING3, actin, ACTL6A/BAF53A, MORF4L1/MRG15, MORF4L2/MRGX, MRGBP, YEATS4/GAS41, VPS72/YL1 and MEAF6. The NuA4 complex interacts with MYC and the adenovirus E1A protein. RUVBL1 interacts with EP400. Component of a NuA4-related complex which contains EP400, TRRAP/PAF400, SRCAP, BRD8/SMAP, EPC1, DMAP1/DNMAP1, RUVBL1/TIP49, RUVBL2, actin, ACTL6A/BAF53A, VPS72 and YEATS4/GAS41. Component of the BAF53 complex, at least composed of ACTL6A/BAF53A, RUVBL1/TIP49, SMARCA2/BRM, and TRRAP/PAF400. Component of some MLL1/MLL complex, at least composed of the core components KMT2A/MLL1, ASH2L, HCFC1/HCF1, WDR5 and RBBP5, as well as the facultative components BACC1, CHD8, E2F6, HSP70, INO80C, KANSL1, LAS1L, MAX, MCRS1, MGA, MYST1/MOF, PELP1, PHF20, PRP31, RING2, RUVB1/TIP49A, RUVB2/TIP49B, SENP3, TAF1, TAF4, TAF6, TAF7, TAF9 and TEX10. Associates with alpha and gamma tubulins, particularly during metaphase and early anaphase. Interacts with NPAT. Component of the chromatin-remodeling INO80 complex; specifically part of a complex module associated with the helicase ATP-binding and the helicase C-terminal domain of INO80. Interacts with IGHMBP2. Interacts with OFD1. Interacts with HINT1. Component of a complex with USP49 and PSMC5. Component of a SWR1-like complex. Component of the R2TP complex composed at least of RUVBL1, RUVBL2, RPAP3 and PIHD1 (PubMed:20864032). Component of the PAQosome complex which is responsible for the biogenesis of several protein complexes and which consists of R2TP complex members RUVBL1, RUVBL2, RPAP3 and PIH1D1, URI complex members PFDN2, PFDN6, PDRG1, UXT and URI1 as well as ASDURF, POLR2E and DNAAF10/WDR92 (PubMed:31738558). Interacts with PIH1D1 (PubMed:17636026). Interacts with ITFG1 (PubMed:25437307). Interacts with WAC; WAC positively regulates MTOR activity by promoting the assembly of the TTT complex composed of TELO2, TTI1 and TTI2 and the RUVBL complex composed of RUVBL1 and RUVBL2 into the TTT-RUVBL complex which leads to the dimerization of the mTORC1 complex and its subsequent activation (PubMed:26812014). The RUVBL1/RUVBL2 complex interacts with ZNHIT1 (via HIT-type zinc finger), ZNHIT3 (via HIT-type zinc finger), ZNHIT6 (via HIT-type zinc finger) and DDX59/ZNHIT5 (via HIT-type zinc finger) in the presence of ADP (PubMed:28561026). Interacts with NOPCHAP1; the interaction is direct and disrupted upon ATP binding (PubMed:33367824). Interacts with SMG1 (PubMed:33205750). Interacts with NOP2, NOP56 and NUFIP1 (PubMed:36161484).</text>
</comment>
<comment type="subunit">
    <text evidence="29">(Microbial infection) Interacts with Mumps L polymerase; this interaction regulates the viral transcription.</text>
</comment>
<comment type="interaction">
    <interactant intactId="EBI-353675">
        <id>Q9Y265</id>
    </interactant>
    <interactant intactId="EBI-491549">
        <id>P35222</id>
        <label>CTNNB1</label>
    </interactant>
    <organismsDiffer>false</organismsDiffer>
    <experiments>3</experiments>
</comment>
<comment type="interaction">
    <interactant intactId="EBI-353675">
        <id>Q9Y265</id>
    </interactant>
    <interactant intactId="EBI-713091">
        <id>O60832</id>
        <label>DKC1</label>
    </interactant>
    <organismsDiffer>false</organismsDiffer>
    <experiments>10</experiments>
</comment>
<comment type="interaction">
    <interactant intactId="EBI-353675">
        <id>Q9Y265</id>
    </interactant>
    <interactant intactId="EBI-2557598">
        <id>O95905</id>
        <label>ECD</label>
    </interactant>
    <organismsDiffer>false</organismsDiffer>
    <experiments>8</experiments>
</comment>
<comment type="interaction">
    <interactant intactId="EBI-353675">
        <id>Q9Y265</id>
    </interactant>
    <interactant intactId="EBI-751472">
        <id>Q9Y283</id>
        <label>INVS</label>
    </interactant>
    <organismsDiffer>false</organismsDiffer>
    <experiments>2</experiments>
</comment>
<comment type="interaction">
    <interactant intactId="EBI-353675">
        <id>Q9Y265</id>
    </interactant>
    <interactant intactId="EBI-2805823">
        <id>Q15051</id>
        <label>IQCB1</label>
    </interactant>
    <organismsDiffer>false</organismsDiffer>
    <experiments>2</experiments>
</comment>
<comment type="interaction">
    <interactant intactId="EBI-353675">
        <id>Q9Y265</id>
    </interactant>
    <interactant intactId="EBI-399080">
        <id>Q92993</id>
        <label>KAT5</label>
    </interactant>
    <organismsDiffer>false</organismsDiffer>
    <experiments>9</experiments>
</comment>
<comment type="interaction">
    <interactant intactId="EBI-353675">
        <id>Q9Y265</id>
    </interactant>
    <interactant intactId="EBI-953828">
        <id>O15259</id>
        <label>NPHP1</label>
    </interactant>
    <organismsDiffer>false</organismsDiffer>
    <experiments>2</experiments>
</comment>
<comment type="interaction">
    <interactant intactId="EBI-353675">
        <id>Q9Y265</id>
    </interactant>
    <interactant intactId="EBI-2804263">
        <id>Q7Z494</id>
        <label>NPHP3</label>
    </interactant>
    <organismsDiffer>false</organismsDiffer>
    <experiments>2</experiments>
</comment>
<comment type="interaction">
    <interactant intactId="EBI-353675">
        <id>Q9Y265</id>
    </interactant>
    <interactant intactId="EBI-4281852">
        <id>O75161</id>
        <label>NPHP4</label>
    </interactant>
    <organismsDiffer>false</organismsDiffer>
    <experiments>2</experiments>
</comment>
<comment type="interaction">
    <interactant intactId="EBI-353675">
        <id>Q9Y265</id>
    </interactant>
    <interactant intactId="EBI-716327">
        <id>O75665</id>
        <label>OFD1</label>
    </interactant>
    <organismsDiffer>false</organismsDiffer>
    <experiments>3</experiments>
</comment>
<comment type="interaction">
    <interactant intactId="EBI-353675">
        <id>Q9Y265</id>
    </interactant>
    <interactant intactId="EBI-352939">
        <id>Q9Y230</id>
        <label>RUVBL2</label>
    </interactant>
    <organismsDiffer>false</organismsDiffer>
    <experiments>40</experiments>
</comment>
<comment type="interaction">
    <interactant intactId="EBI-353675">
        <id>Q9Y265</id>
    </interactant>
    <interactant intactId="EBI-1772203">
        <id>O14746</id>
        <label>TERT</label>
    </interactant>
    <organismsDiffer>false</organismsDiffer>
    <experiments>11</experiments>
</comment>
<comment type="interaction">
    <interactant intactId="EBI-353675">
        <id>Q9Y265</id>
    </interactant>
    <interactant intactId="EBI-366083">
        <id>P04637</id>
        <label>TP53</label>
    </interactant>
    <organismsDiffer>false</organismsDiffer>
    <experiments>10</experiments>
</comment>
<comment type="interaction">
    <interactant intactId="EBI-353675">
        <id>Q9Y265</id>
    </interactant>
    <interactant intactId="EBI-80168">
        <id>P63279</id>
        <label>UBE2I</label>
    </interactant>
    <organismsDiffer>false</organismsDiffer>
    <experiments>3</experiments>
</comment>
<comment type="interaction">
    <interactant intactId="EBI-353675">
        <id>Q9Y265</id>
    </interactant>
    <interactant intactId="EBI-399189">
        <id>Q15906</id>
        <label>VPS72</label>
    </interactant>
    <organismsDiffer>false</organismsDiffer>
    <experiments>11</experiments>
</comment>
<comment type="interaction">
    <interactant intactId="EBI-353675">
        <id>Q9Y265</id>
    </interactant>
    <interactant intactId="EBI-765538">
        <id>P25490</id>
        <label>YY1</label>
    </interactant>
    <organismsDiffer>false</organismsDiffer>
    <experiments>10</experiments>
</comment>
<comment type="interaction">
    <interactant intactId="EBI-353675">
        <id>Q9Y265</id>
    </interactant>
    <interactant intactId="EBI-2557592">
        <id>Q9UHR6</id>
        <label>ZNHIT2</label>
    </interactant>
    <organismsDiffer>false</organismsDiffer>
    <experiments>9</experiments>
</comment>
<comment type="interaction">
    <interactant intactId="EBI-353675">
        <id>Q9Y265</id>
    </interactant>
    <interactant intactId="EBI-10890180">
        <id>G3I183</id>
        <label>I79_017133</label>
    </interactant>
    <organismsDiffer>true</organismsDiffer>
    <experiments>2</experiments>
</comment>
<comment type="subcellular location">
    <subcellularLocation>
        <location>Nucleus matrix</location>
    </subcellularLocation>
    <subcellularLocation>
        <location>Nucleus</location>
        <location>Nucleoplasm</location>
    </subcellularLocation>
    <subcellularLocation>
        <location evidence="6">Cytoplasm</location>
    </subcellularLocation>
    <subcellularLocation>
        <location evidence="6">Membrane</location>
    </subcellularLocation>
    <subcellularLocation>
        <location>Cytoplasm</location>
        <location>Cytoskeleton</location>
        <location>Microtubule organizing center</location>
        <location>Centrosome</location>
    </subcellularLocation>
    <subcellularLocation>
        <location evidence="2">Dynein axonemal particle</location>
    </subcellularLocation>
    <text>Mainly localized in the nucleus, associated with nuclear matrix or in the nuclear cytosol, although it is also present in the cytoplasm and associated with the cell membranes. In prophase and prometaphase it is located at the centrosome and the branching microtubule spindles. After mitotic nuclear membrane disintigration it accumulates at the centrosome and sites of tubulin polymerization. As cells pass through metaphase and into telophase it is located close to the centrosome at the early phase of tubulin polymerization. In anaphase it accumulates at the zone of tubule interdigitation. In telophase it is found at polar tubule overlap, and it reappears at the site of chromosomal decondensation in the daughter cells.</text>
</comment>
<comment type="alternative products">
    <event type="alternative splicing"/>
    <isoform>
        <id>Q9Y265-1</id>
        <name>1</name>
        <sequence type="displayed"/>
    </isoform>
    <isoform>
        <id>Q9Y265-2</id>
        <name>2</name>
        <sequence type="described" ref="VSP_021387 VSP_021388"/>
    </isoform>
</comment>
<comment type="tissue specificity">
    <text>Ubiquitously expressed with high expression in heart, skeletal muscle and testis.</text>
</comment>
<comment type="domain">
    <text>Binding to MYC is dependent on a Myc domain essential for oncogenic activity.</text>
</comment>
<comment type="miscellaneous">
    <text>High level of autoantibodies against RUVBL1 are detected in sera of patients with autoimmune diseases such as polymyositis/dermatomyosistis and autoimmune hepatitis.</text>
</comment>
<comment type="similarity">
    <text evidence="35">Belongs to the RuvB family.</text>
</comment>
<comment type="online information" name="Atlas of Genetics and Cytogenetics in Oncology and Haematology">
    <link uri="https://atlasgeneticsoncology.org/gene/44415/RUVBL1"/>
</comment>
<name>RUVB1_HUMAN</name>
<dbReference type="EC" id="3.6.4.12" evidence="16"/>
<dbReference type="EMBL" id="AB012122">
    <property type="protein sequence ID" value="BAA28169.1"/>
    <property type="molecule type" value="mRNA"/>
</dbReference>
<dbReference type="EMBL" id="AJ010058">
    <property type="protein sequence ID" value="CAA08986.1"/>
    <property type="molecule type" value="mRNA"/>
</dbReference>
<dbReference type="EMBL" id="AF070735">
    <property type="protein sequence ID" value="AAC77819.1"/>
    <property type="molecule type" value="mRNA"/>
</dbReference>
<dbReference type="EMBL" id="AF099084">
    <property type="protein sequence ID" value="AAD04427.1"/>
    <property type="molecule type" value="mRNA"/>
</dbReference>
<dbReference type="EMBL" id="Y18418">
    <property type="protein sequence ID" value="CAB46271.1"/>
    <property type="molecule type" value="mRNA"/>
</dbReference>
<dbReference type="EMBL" id="AF380344">
    <property type="protein sequence ID" value="AAM45570.1"/>
    <property type="molecule type" value="Genomic_DNA"/>
</dbReference>
<dbReference type="EMBL" id="AF380343">
    <property type="protein sequence ID" value="AAM45570.1"/>
    <property type="status" value="JOINED"/>
    <property type="molecule type" value="Genomic_DNA"/>
</dbReference>
<dbReference type="EMBL" id="DQ469310">
    <property type="protein sequence ID" value="ABF13334.1"/>
    <property type="molecule type" value="mRNA"/>
</dbReference>
<dbReference type="EMBL" id="BT007057">
    <property type="protein sequence ID" value="AAP35706.1"/>
    <property type="molecule type" value="mRNA"/>
</dbReference>
<dbReference type="EMBL" id="AK222563">
    <property type="protein sequence ID" value="BAD96283.1"/>
    <property type="molecule type" value="mRNA"/>
</dbReference>
<dbReference type="EMBL" id="AK222575">
    <property type="protein sequence ID" value="BAD96295.1"/>
    <property type="molecule type" value="mRNA"/>
</dbReference>
<dbReference type="EMBL" id="AK312290">
    <property type="protein sequence ID" value="BAG35217.1"/>
    <property type="molecule type" value="mRNA"/>
</dbReference>
<dbReference type="EMBL" id="AB451224">
    <property type="protein sequence ID" value="BAG70038.1"/>
    <property type="molecule type" value="mRNA"/>
</dbReference>
<dbReference type="EMBL" id="BC002993">
    <property type="protein sequence ID" value="AAH02993.1"/>
    <property type="molecule type" value="mRNA"/>
</dbReference>
<dbReference type="EMBL" id="BC012886">
    <property type="protein sequence ID" value="AAH12886.1"/>
    <property type="molecule type" value="mRNA"/>
</dbReference>
<dbReference type="CCDS" id="CCDS3047.1">
    <molecule id="Q9Y265-1"/>
</dbReference>
<dbReference type="PIR" id="JE0334">
    <property type="entry name" value="JE0334"/>
</dbReference>
<dbReference type="RefSeq" id="NP_001306013.1">
    <molecule id="Q9Y265-2"/>
    <property type="nucleotide sequence ID" value="NM_001319084.2"/>
</dbReference>
<dbReference type="RefSeq" id="NP_003698.1">
    <molecule id="Q9Y265-1"/>
    <property type="nucleotide sequence ID" value="NM_003707.3"/>
</dbReference>
<dbReference type="PDB" id="2C9O">
    <property type="method" value="X-ray"/>
    <property type="resolution" value="2.20 A"/>
    <property type="chains" value="A/B/C=1-456"/>
</dbReference>
<dbReference type="PDB" id="2XSZ">
    <property type="method" value="X-ray"/>
    <property type="resolution" value="3.00 A"/>
    <property type="chains" value="A/B/C=2-126, A/B/C=234-456"/>
</dbReference>
<dbReference type="PDB" id="5OAF">
    <property type="method" value="EM"/>
    <property type="resolution" value="4.06 A"/>
    <property type="chains" value="A/C/E=1-456"/>
</dbReference>
<dbReference type="PDB" id="6FO1">
    <property type="method" value="EM"/>
    <property type="resolution" value="3.57 A"/>
    <property type="chains" value="A/B/C=1-456"/>
</dbReference>
<dbReference type="PDB" id="6HTS">
    <property type="method" value="EM"/>
    <property type="resolution" value="4.80 A"/>
    <property type="chains" value="A/C/E=1-456"/>
</dbReference>
<dbReference type="PDB" id="6IGM">
    <property type="method" value="EM"/>
    <property type="resolution" value="4.00 A"/>
    <property type="chains" value="A/C/E=1-456"/>
</dbReference>
<dbReference type="PDB" id="6K0R">
    <property type="method" value="X-ray"/>
    <property type="resolution" value="2.50 A"/>
    <property type="chains" value="A/B/C/G/H/I=2-126, A/B/C/G/H/I=234-456"/>
</dbReference>
<dbReference type="PDB" id="6QI8">
    <property type="method" value="EM"/>
    <property type="resolution" value="3.75 A"/>
    <property type="chains" value="A/B/C=1-456"/>
</dbReference>
<dbReference type="PDB" id="6QI9">
    <property type="method" value="EM"/>
    <property type="resolution" value="4.63 A"/>
    <property type="chains" value="A/B/C=1-456"/>
</dbReference>
<dbReference type="PDB" id="7AHO">
    <property type="method" value="EM"/>
    <property type="resolution" value="4.18 A"/>
    <property type="chains" value="A/B/C=1-456"/>
</dbReference>
<dbReference type="PDB" id="7OLE">
    <property type="method" value="EM"/>
    <property type="resolution" value="3.41 A"/>
    <property type="chains" value="A/C/E=1-456"/>
</dbReference>
<dbReference type="PDB" id="7P6X">
    <property type="method" value="EM"/>
    <property type="resolution" value="4.10 A"/>
    <property type="chains" value="A/B/C=1-456"/>
</dbReference>
<dbReference type="PDB" id="7ZI4">
    <property type="method" value="EM"/>
    <property type="resolution" value="3.20 A"/>
    <property type="chains" value="A/C/E=1-456"/>
</dbReference>
<dbReference type="PDB" id="8QR1">
    <property type="method" value="EM"/>
    <property type="resolution" value="2.40 A"/>
    <property type="chains" value="E/I/L=1-456"/>
</dbReference>
<dbReference type="PDB" id="8X15">
    <property type="method" value="EM"/>
    <property type="resolution" value="3.20 A"/>
    <property type="chains" value="M/O/Q=1-456"/>
</dbReference>
<dbReference type="PDB" id="8X19">
    <property type="method" value="EM"/>
    <property type="resolution" value="3.20 A"/>
    <property type="chains" value="M/O/Q=1-456"/>
</dbReference>
<dbReference type="PDB" id="8X1C">
    <property type="method" value="EM"/>
    <property type="resolution" value="3.20 A"/>
    <property type="chains" value="M/O/Q=1-456"/>
</dbReference>
<dbReference type="PDB" id="8XVG">
    <property type="method" value="EM"/>
    <property type="resolution" value="9.40 A"/>
    <property type="chains" value="A/C/E=1-456"/>
</dbReference>
<dbReference type="PDB" id="8XVT">
    <property type="method" value="EM"/>
    <property type="resolution" value="3.20 A"/>
    <property type="chains" value="A/C/E=1-456"/>
</dbReference>
<dbReference type="PDB" id="9C57">
    <property type="method" value="EM"/>
    <property type="resolution" value="2.75 A"/>
    <property type="chains" value="A/C/E=1-456"/>
</dbReference>
<dbReference type="PDB" id="9C62">
    <property type="method" value="EM"/>
    <property type="resolution" value="5.28 A"/>
    <property type="chains" value="A/C/E=1-456"/>
</dbReference>
<dbReference type="PDB" id="9EMA">
    <property type="method" value="EM"/>
    <property type="resolution" value="2.40 A"/>
    <property type="chains" value="A/B/C=1-456"/>
</dbReference>
<dbReference type="PDB" id="9EMC">
    <property type="method" value="EM"/>
    <property type="resolution" value="3.26 A"/>
    <property type="chains" value="A/B/C=1-456"/>
</dbReference>
<dbReference type="PDBsum" id="2C9O"/>
<dbReference type="PDBsum" id="2XSZ"/>
<dbReference type="PDBsum" id="5OAF"/>
<dbReference type="PDBsum" id="6FO1"/>
<dbReference type="PDBsum" id="6HTS"/>
<dbReference type="PDBsum" id="6IGM"/>
<dbReference type="PDBsum" id="6K0R"/>
<dbReference type="PDBsum" id="6QI8"/>
<dbReference type="PDBsum" id="6QI9"/>
<dbReference type="PDBsum" id="7AHO"/>
<dbReference type="PDBsum" id="7OLE"/>
<dbReference type="PDBsum" id="7P6X"/>
<dbReference type="PDBsum" id="7ZI4"/>
<dbReference type="PDBsum" id="8QR1"/>
<dbReference type="PDBsum" id="8X15"/>
<dbReference type="PDBsum" id="8X19"/>
<dbReference type="PDBsum" id="8X1C"/>
<dbReference type="PDBsum" id="8XVG"/>
<dbReference type="PDBsum" id="8XVT"/>
<dbReference type="PDBsum" id="9C57"/>
<dbReference type="PDBsum" id="9C62"/>
<dbReference type="PDBsum" id="9EMA"/>
<dbReference type="PDBsum" id="9EMC"/>
<dbReference type="EMDB" id="EMD-11789"/>
<dbReference type="EMDB" id="EMD-12979"/>
<dbReference type="EMDB" id="EMD-13233"/>
<dbReference type="EMDB" id="EMD-14737"/>
<dbReference type="EMDB" id="EMD-18581"/>
<dbReference type="EMDB" id="EMD-18591"/>
<dbReference type="EMDB" id="EMD-18597"/>
<dbReference type="EMDB" id="EMD-18598"/>
<dbReference type="EMDB" id="EMD-18611"/>
<dbReference type="EMDB" id="EMD-18794"/>
<dbReference type="EMDB" id="EMD-19815"/>
<dbReference type="EMDB" id="EMD-19817"/>
<dbReference type="EMDB" id="EMD-3773"/>
<dbReference type="EMDB" id="EMD-37984"/>
<dbReference type="EMDB" id="EMD-37988"/>
<dbReference type="EMDB" id="EMD-37990"/>
<dbReference type="EMDB" id="EMD-38703"/>
<dbReference type="EMDB" id="EMD-38718"/>
<dbReference type="EMDB" id="EMD-3954"/>
<dbReference type="EMDB" id="EMD-4287"/>
<dbReference type="EMDB" id="EMD-4289"/>
<dbReference type="EMDB" id="EMD-4290"/>
<dbReference type="EMDB" id="EMD-4291"/>
<dbReference type="EMDB" id="EMD-45206"/>
<dbReference type="EMDB" id="EMD-45240"/>
<dbReference type="EMDB" id="EMD-4552"/>
<dbReference type="EMDB" id="EMD-4553"/>
<dbReference type="EMDB" id="EMD-4554"/>
<dbReference type="EMDB" id="EMD-4555"/>
<dbReference type="EMDB" id="EMD-4556"/>
<dbReference type="EMDB" id="EMD-4557"/>
<dbReference type="EMDB" id="EMD-9668"/>
<dbReference type="SASBDB" id="Q9Y265"/>
<dbReference type="SMR" id="Q9Y265"/>
<dbReference type="BioGRID" id="114166">
    <property type="interactions" value="623"/>
</dbReference>
<dbReference type="ComplexPortal" id="CPX-6143">
    <property type="entry name" value="R2TP core co-chaperone complex"/>
</dbReference>
<dbReference type="ComplexPortal" id="CPX-6150">
    <property type="entry name" value="R2SP co-chaperone complex"/>
</dbReference>
<dbReference type="ComplexPortal" id="CPX-6152">
    <property type="entry name" value="R2SD co-chaperone complex"/>
</dbReference>
<dbReference type="ComplexPortal" id="CPX-6153">
    <property type="entry name" value="R2T co-chaperone complex"/>
</dbReference>
<dbReference type="ComplexPortal" id="CPX-846">
    <property type="entry name" value="INO80 chromatin remodeling complex"/>
</dbReference>
<dbReference type="ComplexPortal" id="CPX-974">
    <property type="entry name" value="SRCAP chromatin remodeling complex"/>
</dbReference>
<dbReference type="ComplexPortal" id="CPX-978">
    <property type="entry name" value="NuA4 histone acetyltransferase complex"/>
</dbReference>
<dbReference type="CORUM" id="Q9Y265"/>
<dbReference type="DIP" id="DIP-29937N"/>
<dbReference type="FunCoup" id="Q9Y265">
    <property type="interactions" value="2341"/>
</dbReference>
<dbReference type="IntAct" id="Q9Y265">
    <property type="interactions" value="252"/>
</dbReference>
<dbReference type="MINT" id="Q9Y265"/>
<dbReference type="STRING" id="9606.ENSP00000318297"/>
<dbReference type="BindingDB" id="Q9Y265"/>
<dbReference type="ChEMBL" id="CHEMBL3259467"/>
<dbReference type="GlyGen" id="Q9Y265">
    <property type="glycosylation" value="1 site, 1 O-linked glycan (1 site)"/>
</dbReference>
<dbReference type="iPTMnet" id="Q9Y265"/>
<dbReference type="MetOSite" id="Q9Y265"/>
<dbReference type="PhosphoSitePlus" id="Q9Y265"/>
<dbReference type="SwissPalm" id="Q9Y265"/>
<dbReference type="BioMuta" id="RUVBL1"/>
<dbReference type="DMDM" id="28201891"/>
<dbReference type="OGP" id="Q9Y265"/>
<dbReference type="REPRODUCTION-2DPAGE" id="Q9Y265"/>
<dbReference type="CPTAC" id="CPTAC-268"/>
<dbReference type="CPTAC" id="CPTAC-269"/>
<dbReference type="jPOST" id="Q9Y265"/>
<dbReference type="MassIVE" id="Q9Y265"/>
<dbReference type="PaxDb" id="9606-ENSP00000318297"/>
<dbReference type="PeptideAtlas" id="Q9Y265"/>
<dbReference type="ProteomicsDB" id="85669">
    <molecule id="Q9Y265-1"/>
</dbReference>
<dbReference type="ProteomicsDB" id="85670">
    <molecule id="Q9Y265-2"/>
</dbReference>
<dbReference type="Pumba" id="Q9Y265"/>
<dbReference type="Antibodypedia" id="17283">
    <property type="antibodies" value="393 antibodies from 35 providers"/>
</dbReference>
<dbReference type="DNASU" id="8607"/>
<dbReference type="Ensembl" id="ENST00000322623.10">
    <molecule id="Q9Y265-1"/>
    <property type="protein sequence ID" value="ENSP00000318297.5"/>
    <property type="gene ID" value="ENSG00000175792.12"/>
</dbReference>
<dbReference type="GeneID" id="8607"/>
<dbReference type="KEGG" id="hsa:8607"/>
<dbReference type="MANE-Select" id="ENST00000322623.10">
    <property type="protein sequence ID" value="ENSP00000318297.5"/>
    <property type="RefSeq nucleotide sequence ID" value="NM_003707.3"/>
    <property type="RefSeq protein sequence ID" value="NP_003698.1"/>
</dbReference>
<dbReference type="UCSC" id="uc003ekh.4">
    <molecule id="Q9Y265-1"/>
    <property type="organism name" value="human"/>
</dbReference>
<dbReference type="AGR" id="HGNC:10474"/>
<dbReference type="CTD" id="8607"/>
<dbReference type="DisGeNET" id="8607"/>
<dbReference type="GeneCards" id="RUVBL1"/>
<dbReference type="HGNC" id="HGNC:10474">
    <property type="gene designation" value="RUVBL1"/>
</dbReference>
<dbReference type="HPA" id="ENSG00000175792">
    <property type="expression patterns" value="Low tissue specificity"/>
</dbReference>
<dbReference type="MalaCards" id="RUVBL1"/>
<dbReference type="MIM" id="603449">
    <property type="type" value="gene"/>
</dbReference>
<dbReference type="neXtProt" id="NX_Q9Y265"/>
<dbReference type="OpenTargets" id="ENSG00000175792"/>
<dbReference type="PharmGKB" id="PA34887"/>
<dbReference type="VEuPathDB" id="HostDB:ENSG00000175792"/>
<dbReference type="eggNOG" id="KOG1942">
    <property type="taxonomic scope" value="Eukaryota"/>
</dbReference>
<dbReference type="GeneTree" id="ENSGT00940000153556"/>
<dbReference type="HOGENOM" id="CLU_028311_1_1_1"/>
<dbReference type="InParanoid" id="Q9Y265"/>
<dbReference type="OMA" id="RTLPYNK"/>
<dbReference type="OrthoDB" id="10060499at2759"/>
<dbReference type="PAN-GO" id="Q9Y265">
    <property type="GO annotations" value="9 GO annotations based on evolutionary models"/>
</dbReference>
<dbReference type="PhylomeDB" id="Q9Y265"/>
<dbReference type="TreeFam" id="TF300457"/>
<dbReference type="PathwayCommons" id="Q9Y265"/>
<dbReference type="Reactome" id="R-HSA-171319">
    <property type="pathway name" value="Telomere Extension By Telomerase"/>
</dbReference>
<dbReference type="Reactome" id="R-HSA-201722">
    <property type="pathway name" value="Formation of the beta-catenin:TCF transactivating complex"/>
</dbReference>
<dbReference type="Reactome" id="R-HSA-3214847">
    <property type="pathway name" value="HATs acetylate histones"/>
</dbReference>
<dbReference type="Reactome" id="R-HSA-5689603">
    <property type="pathway name" value="UCH proteinases"/>
</dbReference>
<dbReference type="Reactome" id="R-HSA-5689880">
    <property type="pathway name" value="Ub-specific processing proteases"/>
</dbReference>
<dbReference type="Reactome" id="R-HSA-5696394">
    <property type="pathway name" value="DNA Damage Recognition in GG-NER"/>
</dbReference>
<dbReference type="Reactome" id="R-HSA-606279">
    <property type="pathway name" value="Deposition of new CENPA-containing nucleosomes at the centromere"/>
</dbReference>
<dbReference type="SignaLink" id="Q9Y265"/>
<dbReference type="SIGNOR" id="Q9Y265"/>
<dbReference type="BioGRID-ORCS" id="8607">
    <property type="hits" value="770 hits in 1155 CRISPR screens"/>
</dbReference>
<dbReference type="CD-CODE" id="6F24707C">
    <property type="entry name" value="Cajal body"/>
</dbReference>
<dbReference type="CD-CODE" id="8C2F96ED">
    <property type="entry name" value="Centrosome"/>
</dbReference>
<dbReference type="CD-CODE" id="91857CE7">
    <property type="entry name" value="Nucleolus"/>
</dbReference>
<dbReference type="ChiTaRS" id="RUVBL1">
    <property type="organism name" value="human"/>
</dbReference>
<dbReference type="EvolutionaryTrace" id="Q9Y265"/>
<dbReference type="GeneWiki" id="RuvB-like_1"/>
<dbReference type="GenomeRNAi" id="8607"/>
<dbReference type="Pharos" id="Q9Y265">
    <property type="development level" value="Tbio"/>
</dbReference>
<dbReference type="PRO" id="PR:Q9Y265"/>
<dbReference type="Proteomes" id="UP000005640">
    <property type="component" value="Chromosome 3"/>
</dbReference>
<dbReference type="RNAct" id="Q9Y265">
    <property type="molecule type" value="protein"/>
</dbReference>
<dbReference type="Bgee" id="ENSG00000175792">
    <property type="expression patterns" value="Expressed in right uterine tube and 100 other cell types or tissues"/>
</dbReference>
<dbReference type="ExpressionAtlas" id="Q9Y265">
    <property type="expression patterns" value="baseline and differential"/>
</dbReference>
<dbReference type="GO" id="GO:0005813">
    <property type="term" value="C:centrosome"/>
    <property type="evidence" value="ECO:0007669"/>
    <property type="project" value="UniProtKB-SubCell"/>
</dbReference>
<dbReference type="GO" id="GO:0036064">
    <property type="term" value="C:ciliary basal body"/>
    <property type="evidence" value="ECO:0000314"/>
    <property type="project" value="HPA"/>
</dbReference>
<dbReference type="GO" id="GO:0005829">
    <property type="term" value="C:cytosol"/>
    <property type="evidence" value="ECO:0000314"/>
    <property type="project" value="HPA"/>
</dbReference>
<dbReference type="GO" id="GO:0120293">
    <property type="term" value="C:dynein axonemal particle"/>
    <property type="evidence" value="ECO:0000250"/>
    <property type="project" value="UniProtKB"/>
</dbReference>
<dbReference type="GO" id="GO:0070062">
    <property type="term" value="C:extracellular exosome"/>
    <property type="evidence" value="ECO:0007005"/>
    <property type="project" value="UniProtKB"/>
</dbReference>
<dbReference type="GO" id="GO:0031011">
    <property type="term" value="C:Ino80 complex"/>
    <property type="evidence" value="ECO:0000314"/>
    <property type="project" value="UniProtKB"/>
</dbReference>
<dbReference type="GO" id="GO:0016020">
    <property type="term" value="C:membrane"/>
    <property type="evidence" value="ECO:0007669"/>
    <property type="project" value="UniProtKB-SubCell"/>
</dbReference>
<dbReference type="GO" id="GO:0071339">
    <property type="term" value="C:MLL1 complex"/>
    <property type="evidence" value="ECO:0000314"/>
    <property type="project" value="UniProtKB"/>
</dbReference>
<dbReference type="GO" id="GO:0035267">
    <property type="term" value="C:NuA4 histone acetyltransferase complex"/>
    <property type="evidence" value="ECO:0000314"/>
    <property type="project" value="UniProtKB"/>
</dbReference>
<dbReference type="GO" id="GO:0016363">
    <property type="term" value="C:nuclear matrix"/>
    <property type="evidence" value="ECO:0007669"/>
    <property type="project" value="UniProtKB-SubCell"/>
</dbReference>
<dbReference type="GO" id="GO:0016607">
    <property type="term" value="C:nuclear speck"/>
    <property type="evidence" value="ECO:0000314"/>
    <property type="project" value="HPA"/>
</dbReference>
<dbReference type="GO" id="GO:0005654">
    <property type="term" value="C:nucleoplasm"/>
    <property type="evidence" value="ECO:0000314"/>
    <property type="project" value="HPA"/>
</dbReference>
<dbReference type="GO" id="GO:0000786">
    <property type="term" value="C:nucleosome"/>
    <property type="evidence" value="ECO:0000314"/>
    <property type="project" value="ComplexPortal"/>
</dbReference>
<dbReference type="GO" id="GO:0005634">
    <property type="term" value="C:nucleus"/>
    <property type="evidence" value="ECO:0000314"/>
    <property type="project" value="UniProtKB"/>
</dbReference>
<dbReference type="GO" id="GO:0101031">
    <property type="term" value="C:protein folding chaperone complex"/>
    <property type="evidence" value="ECO:0000353"/>
    <property type="project" value="ComplexPortal"/>
</dbReference>
<dbReference type="GO" id="GO:0097255">
    <property type="term" value="C:R2TP complex"/>
    <property type="evidence" value="ECO:0000314"/>
    <property type="project" value="UniProtKB"/>
</dbReference>
<dbReference type="GO" id="GO:1990904">
    <property type="term" value="C:ribonucleoprotein complex"/>
    <property type="evidence" value="ECO:0007669"/>
    <property type="project" value="Ensembl"/>
</dbReference>
<dbReference type="GO" id="GO:1990062">
    <property type="term" value="C:RPAP3/R2TP/prefoldin-like complex"/>
    <property type="evidence" value="ECO:0000353"/>
    <property type="project" value="ComplexPortal"/>
</dbReference>
<dbReference type="GO" id="GO:0000812">
    <property type="term" value="C:Swr1 complex"/>
    <property type="evidence" value="ECO:0000314"/>
    <property type="project" value="UniProtKB"/>
</dbReference>
<dbReference type="GO" id="GO:0043531">
    <property type="term" value="F:ADP binding"/>
    <property type="evidence" value="ECO:0007669"/>
    <property type="project" value="Ensembl"/>
</dbReference>
<dbReference type="GO" id="GO:0005524">
    <property type="term" value="F:ATP binding"/>
    <property type="evidence" value="ECO:0007669"/>
    <property type="project" value="UniProtKB-KW"/>
</dbReference>
<dbReference type="GO" id="GO:0016887">
    <property type="term" value="F:ATP hydrolysis activity"/>
    <property type="evidence" value="ECO:0000314"/>
    <property type="project" value="UniProtKB"/>
</dbReference>
<dbReference type="GO" id="GO:0051117">
    <property type="term" value="F:ATPase binding"/>
    <property type="evidence" value="ECO:0007669"/>
    <property type="project" value="Ensembl"/>
</dbReference>
<dbReference type="GO" id="GO:0045296">
    <property type="term" value="F:cadherin binding"/>
    <property type="evidence" value="ECO:0007005"/>
    <property type="project" value="BHF-UCL"/>
</dbReference>
<dbReference type="GO" id="GO:0003678">
    <property type="term" value="F:DNA helicase activity"/>
    <property type="evidence" value="ECO:0000314"/>
    <property type="project" value="UniProtKB"/>
</dbReference>
<dbReference type="GO" id="GO:0017025">
    <property type="term" value="F:TBP-class protein binding"/>
    <property type="evidence" value="ECO:0000314"/>
    <property type="project" value="UniProtKB"/>
</dbReference>
<dbReference type="GO" id="GO:0001094">
    <property type="term" value="F:TFIID-class transcription factor complex binding"/>
    <property type="evidence" value="ECO:0007669"/>
    <property type="project" value="Ensembl"/>
</dbReference>
<dbReference type="GO" id="GO:0003713">
    <property type="term" value="F:transcription coactivator activity"/>
    <property type="evidence" value="ECO:0000314"/>
    <property type="project" value="UniProtKB"/>
</dbReference>
<dbReference type="GO" id="GO:0000492">
    <property type="term" value="P:box C/D snoRNP assembly"/>
    <property type="evidence" value="ECO:0000318"/>
    <property type="project" value="GO_Central"/>
</dbReference>
<dbReference type="GO" id="GO:0051301">
    <property type="term" value="P:cell division"/>
    <property type="evidence" value="ECO:0007669"/>
    <property type="project" value="UniProtKB-KW"/>
</dbReference>
<dbReference type="GO" id="GO:0006338">
    <property type="term" value="P:chromatin remodeling"/>
    <property type="evidence" value="ECO:0000314"/>
    <property type="project" value="ComplexPortal"/>
</dbReference>
<dbReference type="GO" id="GO:0006310">
    <property type="term" value="P:DNA recombination"/>
    <property type="evidence" value="ECO:0007669"/>
    <property type="project" value="UniProtKB-KW"/>
</dbReference>
<dbReference type="GO" id="GO:0006281">
    <property type="term" value="P:DNA repair"/>
    <property type="evidence" value="ECO:0007669"/>
    <property type="project" value="UniProtKB-KW"/>
</dbReference>
<dbReference type="GO" id="GO:0090263">
    <property type="term" value="P:positive regulation of canonical Wnt signaling pathway"/>
    <property type="evidence" value="ECO:0000314"/>
    <property type="project" value="UniProtKB"/>
</dbReference>
<dbReference type="GO" id="GO:0045739">
    <property type="term" value="P:positive regulation of DNA repair"/>
    <property type="evidence" value="ECO:0000266"/>
    <property type="project" value="ComplexPortal"/>
</dbReference>
<dbReference type="GO" id="GO:0045893">
    <property type="term" value="P:positive regulation of DNA-templated transcription"/>
    <property type="evidence" value="ECO:0000315"/>
    <property type="project" value="ComplexPortal"/>
</dbReference>
<dbReference type="GO" id="GO:1905168">
    <property type="term" value="P:positive regulation of double-strand break repair via homologous recombination"/>
    <property type="evidence" value="ECO:0000314"/>
    <property type="project" value="ComplexPortal"/>
</dbReference>
<dbReference type="GO" id="GO:1904507">
    <property type="term" value="P:positive regulation of telomere maintenance in response to DNA damage"/>
    <property type="evidence" value="ECO:0000266"/>
    <property type="project" value="ComplexPortal"/>
</dbReference>
<dbReference type="GO" id="GO:0050821">
    <property type="term" value="P:protein stabilization"/>
    <property type="evidence" value="ECO:0000303"/>
    <property type="project" value="ComplexPortal"/>
</dbReference>
<dbReference type="GO" id="GO:0042981">
    <property type="term" value="P:regulation of apoptotic process"/>
    <property type="evidence" value="ECO:0000303"/>
    <property type="project" value="ComplexPortal"/>
</dbReference>
<dbReference type="GO" id="GO:0051726">
    <property type="term" value="P:regulation of cell cycle"/>
    <property type="evidence" value="ECO:0000315"/>
    <property type="project" value="ComplexPortal"/>
</dbReference>
<dbReference type="GO" id="GO:0033044">
    <property type="term" value="P:regulation of chromosome organization"/>
    <property type="evidence" value="ECO:0000315"/>
    <property type="project" value="ComplexPortal"/>
</dbReference>
<dbReference type="GO" id="GO:0006282">
    <property type="term" value="P:regulation of DNA repair"/>
    <property type="evidence" value="ECO:0000266"/>
    <property type="project" value="ComplexPortal"/>
</dbReference>
<dbReference type="GO" id="GO:0006275">
    <property type="term" value="P:regulation of DNA replication"/>
    <property type="evidence" value="ECO:0000315"/>
    <property type="project" value="ComplexPortal"/>
</dbReference>
<dbReference type="GO" id="GO:0060382">
    <property type="term" value="P:regulation of DNA strand elongation"/>
    <property type="evidence" value="ECO:0000315"/>
    <property type="project" value="ComplexPortal"/>
</dbReference>
<dbReference type="GO" id="GO:0006355">
    <property type="term" value="P:regulation of DNA-templated transcription"/>
    <property type="evidence" value="ECO:0000303"/>
    <property type="project" value="ComplexPortal"/>
</dbReference>
<dbReference type="GO" id="GO:2000779">
    <property type="term" value="P:regulation of double-strand break repair"/>
    <property type="evidence" value="ECO:0000303"/>
    <property type="project" value="ComplexPortal"/>
</dbReference>
<dbReference type="GO" id="GO:0045995">
    <property type="term" value="P:regulation of embryonic development"/>
    <property type="evidence" value="ECO:0000266"/>
    <property type="project" value="ComplexPortal"/>
</dbReference>
<dbReference type="GO" id="GO:0006357">
    <property type="term" value="P:regulation of transcription by RNA polymerase II"/>
    <property type="evidence" value="ECO:0000318"/>
    <property type="project" value="GO_Central"/>
</dbReference>
<dbReference type="GO" id="GO:0007283">
    <property type="term" value="P:spermatogenesis"/>
    <property type="evidence" value="ECO:0000304"/>
    <property type="project" value="ProtInc"/>
</dbReference>
<dbReference type="GO" id="GO:0090671">
    <property type="term" value="P:telomerase RNA localization to Cajal body"/>
    <property type="evidence" value="ECO:0007001"/>
    <property type="project" value="BHF-UCL"/>
</dbReference>
<dbReference type="GO" id="GO:0000723">
    <property type="term" value="P:telomere maintenance"/>
    <property type="evidence" value="ECO:0000266"/>
    <property type="project" value="ComplexPortal"/>
</dbReference>
<dbReference type="FunFam" id="1.10.8.60:FF:000010">
    <property type="entry name" value="RuvB-like helicase"/>
    <property type="match status" value="1"/>
</dbReference>
<dbReference type="FunFam" id="2.40.50.360:FF:000001">
    <property type="entry name" value="RuvB-like helicase"/>
    <property type="match status" value="1"/>
</dbReference>
<dbReference type="Gene3D" id="1.10.8.60">
    <property type="match status" value="1"/>
</dbReference>
<dbReference type="Gene3D" id="3.40.50.300">
    <property type="entry name" value="P-loop containing nucleotide triphosphate hydrolases"/>
    <property type="match status" value="1"/>
</dbReference>
<dbReference type="Gene3D" id="2.40.50.360">
    <property type="entry name" value="RuvB-like helicase, domain II"/>
    <property type="match status" value="1"/>
</dbReference>
<dbReference type="InterPro" id="IPR003593">
    <property type="entry name" value="AAA+_ATPase"/>
</dbReference>
<dbReference type="InterPro" id="IPR027417">
    <property type="entry name" value="P-loop_NTPase"/>
</dbReference>
<dbReference type="InterPro" id="IPR027238">
    <property type="entry name" value="RuvB-like"/>
</dbReference>
<dbReference type="InterPro" id="IPR041048">
    <property type="entry name" value="RuvB-like_C"/>
</dbReference>
<dbReference type="InterPro" id="IPR042487">
    <property type="entry name" value="RuvBL1/2_DNA/RNA_bd_dom"/>
</dbReference>
<dbReference type="InterPro" id="IPR010339">
    <property type="entry name" value="TIP49_P-loop"/>
</dbReference>
<dbReference type="PANTHER" id="PTHR11093">
    <property type="entry name" value="RUVB-RELATED REPTIN AND PONTIN"/>
    <property type="match status" value="1"/>
</dbReference>
<dbReference type="Pfam" id="PF06068">
    <property type="entry name" value="TIP49"/>
    <property type="match status" value="1"/>
</dbReference>
<dbReference type="Pfam" id="PF17856">
    <property type="entry name" value="TIP49_C"/>
    <property type="match status" value="1"/>
</dbReference>
<dbReference type="SMART" id="SM00382">
    <property type="entry name" value="AAA"/>
    <property type="match status" value="1"/>
</dbReference>
<dbReference type="SUPFAM" id="SSF52540">
    <property type="entry name" value="P-loop containing nucleoside triphosphate hydrolases"/>
    <property type="match status" value="1"/>
</dbReference>
<protein>
    <recommendedName>
        <fullName evidence="35">RuvB-like 1</fullName>
        <ecNumber evidence="16">3.6.4.12</ecNumber>
    </recommendedName>
    <alternativeName>
        <fullName>49 kDa TATA box-binding protein-interacting protein</fullName>
        <shortName>49 kDa TBP-interacting protein</shortName>
    </alternativeName>
    <alternativeName>
        <fullName>54 kDa erythrocyte cytosolic protein</fullName>
        <shortName>ECP-54</shortName>
    </alternativeName>
    <alternativeName>
        <fullName>INO80 complex subunit H</fullName>
    </alternativeName>
    <alternativeName>
        <fullName>Nuclear matrix protein 238</fullName>
        <shortName>NMP 238</shortName>
    </alternativeName>
    <alternativeName>
        <fullName>Pontin 52</fullName>
    </alternativeName>
    <alternativeName>
        <fullName>TIP49a</fullName>
    </alternativeName>
    <alternativeName>
        <fullName>TIP60-associated protein 54-alpha</fullName>
        <shortName>TAP54-alpha</shortName>
    </alternativeName>
</protein>
<reference key="1">
    <citation type="journal article" date="1998" name="Biochem. Biophys. Res. Commun.">
        <title>TIP49, homologous to the bacterial DNA helicase RuvB, acts as an autoantigen in human.</title>
        <authorList>
            <person name="Makino Y."/>
            <person name="Mimori T."/>
            <person name="Koike C."/>
            <person name="Kanemaki M."/>
            <person name="Kurokawa Y."/>
            <person name="Inoue S."/>
            <person name="Kishimoto T."/>
            <person name="Tamura T.-A."/>
        </authorList>
    </citation>
    <scope>NUCLEOTIDE SEQUENCE [MRNA] (ISOFORM 1)</scope>
    <source>
        <tissue>Liver</tissue>
    </source>
</reference>
<reference key="2">
    <citation type="journal article" date="1998" name="Biochem. Biophys. Res. Commun.">
        <title>Identification and characterization of the ubiquitously occurring nuclear matrix protein NMP 238.</title>
        <authorList>
            <person name="Holzmann K."/>
            <person name="Gerner C."/>
            <person name="Korosec T."/>
            <person name="Poeltl A."/>
            <person name="Grimm R."/>
            <person name="Sauermann G."/>
        </authorList>
    </citation>
    <scope>NUCLEOTIDE SEQUENCE [MRNA] (ISOFORM 1)</scope>
    <scope>PROTEIN SEQUENCE OF 1-7</scope>
    <source>
        <tissue>Pancreas</tissue>
    </source>
</reference>
<reference key="3">
    <citation type="journal article" date="1998" name="J. Biol. Chem.">
        <title>An eukaryotic RuvB-like protein (RUVBL1) essential for growth.</title>
        <authorList>
            <person name="Qiu X.-B."/>
            <person name="Lin Y.-L."/>
            <person name="Thome K.C."/>
            <person name="Pian P."/>
            <person name="Schlegel B.P."/>
            <person name="Weremowicz S."/>
            <person name="Parvin J.D."/>
            <person name="Dutta A."/>
        </authorList>
    </citation>
    <scope>NUCLEOTIDE SEQUENCE [MRNA] (ISOFORM 1)</scope>
    <source>
        <tissue>Placenta</tissue>
    </source>
</reference>
<reference key="4">
    <citation type="journal article" date="1998" name="Proc. Natl. Acad. Sci. U.S.A.">
        <title>Pontin52, an interaction partner of beta-catenin, binds to the TATA box binding protein.</title>
        <authorList>
            <person name="Bauer A."/>
            <person name="Huber O."/>
            <person name="Kemler R."/>
        </authorList>
    </citation>
    <scope>NUCLEOTIDE SEQUENCE [MRNA] (ISOFORM 1)</scope>
    <source>
        <tissue>Colon adenocarcinoma</tissue>
    </source>
</reference>
<reference key="5">
    <citation type="journal article" date="1999" name="Biochim. Biophys. Acta">
        <title>Isolation, molecular characterization, and tissue-specific expression of ECP-51 and ECP-54 (TIP49), two homologous, interacting erythroid cytosolic proteins.</title>
        <authorList>
            <person name="Salzer U."/>
            <person name="Kubicek M."/>
            <person name="Prohaska R."/>
        </authorList>
    </citation>
    <scope>NUCLEOTIDE SEQUENCE [MRNA] (ISOFORM 1)</scope>
    <scope>PROTEIN SEQUENCE OF 34-46; 108-118; 169-177; 207-219 AND 446-456</scope>
    <source>
        <tissue>Bone marrow</tissue>
    </source>
</reference>
<reference key="6">
    <citation type="journal article" date="2001" name="J. Biol. Chem.">
        <title>Purification, cloning, and characterization of a profibrinolytic plasminogen-binding protein, TIP49a.</title>
        <authorList>
            <person name="Hawley S.B."/>
            <person name="Tamura T.-A."/>
            <person name="Miles L.A."/>
        </authorList>
    </citation>
    <scope>NUCLEOTIDE SEQUENCE [MRNA] (ISOFORM 1)</scope>
    <scope>PROTEIN SEQUENCE OF 172-182 AND 184-201</scope>
    <scope>FUNCTION</scope>
    <scope>SUBCELLULAR LOCATION</scope>
</reference>
<reference key="7">
    <citation type="submission" date="2001-05" db="EMBL/GenBank/DDBJ databases">
        <title>The genomic structure of the human pontin 52 gene.</title>
        <authorList>
            <person name="Huber O."/>
            <person name="Orso S."/>
        </authorList>
    </citation>
    <scope>NUCLEOTIDE SEQUENCE [GENOMIC DNA] (ISOFORM 1)</scope>
</reference>
<reference key="8">
    <citation type="submission" date="2006-03" db="EMBL/GenBank/DDBJ databases">
        <title>RUVBL1-FK- splice variant.</title>
        <authorList>
            <person name="Koc F."/>
            <person name="Gartner W."/>
            <person name="Birkenkamp-Demtroeder K."/>
            <person name="Altenberger T."/>
            <person name="Daneva T."/>
            <person name="Wagner L."/>
        </authorList>
    </citation>
    <scope>NUCLEOTIDE SEQUENCE [MRNA] (ISOFORM 2)</scope>
</reference>
<reference key="9">
    <citation type="submission" date="2003-05" db="EMBL/GenBank/DDBJ databases">
        <title>Cloning of human full-length CDSs in BD Creator(TM) system donor vector.</title>
        <authorList>
            <person name="Kalnine N."/>
            <person name="Chen X."/>
            <person name="Rolfs A."/>
            <person name="Halleck A."/>
            <person name="Hines L."/>
            <person name="Eisenstein S."/>
            <person name="Koundinya M."/>
            <person name="Raphael J."/>
            <person name="Moreira D."/>
            <person name="Kelley T."/>
            <person name="LaBaer J."/>
            <person name="Lin Y."/>
            <person name="Phelan M."/>
            <person name="Farmer A."/>
        </authorList>
    </citation>
    <scope>NUCLEOTIDE SEQUENCE [LARGE SCALE MRNA] (ISOFORM 1)</scope>
</reference>
<reference key="10">
    <citation type="journal article" date="2004" name="Nat. Genet.">
        <title>Complete sequencing and characterization of 21,243 full-length human cDNAs.</title>
        <authorList>
            <person name="Ota T."/>
            <person name="Suzuki Y."/>
            <person name="Nishikawa T."/>
            <person name="Otsuki T."/>
            <person name="Sugiyama T."/>
            <person name="Irie R."/>
            <person name="Wakamatsu A."/>
            <person name="Hayashi K."/>
            <person name="Sato H."/>
            <person name="Nagai K."/>
            <person name="Kimura K."/>
            <person name="Makita H."/>
            <person name="Sekine M."/>
            <person name="Obayashi M."/>
            <person name="Nishi T."/>
            <person name="Shibahara T."/>
            <person name="Tanaka T."/>
            <person name="Ishii S."/>
            <person name="Yamamoto J."/>
            <person name="Saito K."/>
            <person name="Kawai Y."/>
            <person name="Isono Y."/>
            <person name="Nakamura Y."/>
            <person name="Nagahari K."/>
            <person name="Murakami K."/>
            <person name="Yasuda T."/>
            <person name="Iwayanagi T."/>
            <person name="Wagatsuma M."/>
            <person name="Shiratori A."/>
            <person name="Sudo H."/>
            <person name="Hosoiri T."/>
            <person name="Kaku Y."/>
            <person name="Kodaira H."/>
            <person name="Kondo H."/>
            <person name="Sugawara M."/>
            <person name="Takahashi M."/>
            <person name="Kanda K."/>
            <person name="Yokoi T."/>
            <person name="Furuya T."/>
            <person name="Kikkawa E."/>
            <person name="Omura Y."/>
            <person name="Abe K."/>
            <person name="Kamihara K."/>
            <person name="Katsuta N."/>
            <person name="Sato K."/>
            <person name="Tanikawa M."/>
            <person name="Yamazaki M."/>
            <person name="Ninomiya K."/>
            <person name="Ishibashi T."/>
            <person name="Yamashita H."/>
            <person name="Murakawa K."/>
            <person name="Fujimori K."/>
            <person name="Tanai H."/>
            <person name="Kimata M."/>
            <person name="Watanabe M."/>
            <person name="Hiraoka S."/>
            <person name="Chiba Y."/>
            <person name="Ishida S."/>
            <person name="Ono Y."/>
            <person name="Takiguchi S."/>
            <person name="Watanabe S."/>
            <person name="Yosida M."/>
            <person name="Hotuta T."/>
            <person name="Kusano J."/>
            <person name="Kanehori K."/>
            <person name="Takahashi-Fujii A."/>
            <person name="Hara H."/>
            <person name="Tanase T.-O."/>
            <person name="Nomura Y."/>
            <person name="Togiya S."/>
            <person name="Komai F."/>
            <person name="Hara R."/>
            <person name="Takeuchi K."/>
            <person name="Arita M."/>
            <person name="Imose N."/>
            <person name="Musashino K."/>
            <person name="Yuuki H."/>
            <person name="Oshima A."/>
            <person name="Sasaki N."/>
            <person name="Aotsuka S."/>
            <person name="Yoshikawa Y."/>
            <person name="Matsunawa H."/>
            <person name="Ichihara T."/>
            <person name="Shiohata N."/>
            <person name="Sano S."/>
            <person name="Moriya S."/>
            <person name="Momiyama H."/>
            <person name="Satoh N."/>
            <person name="Takami S."/>
            <person name="Terashima Y."/>
            <person name="Suzuki O."/>
            <person name="Nakagawa S."/>
            <person name="Senoh A."/>
            <person name="Mizoguchi H."/>
            <person name="Goto Y."/>
            <person name="Shimizu F."/>
            <person name="Wakebe H."/>
            <person name="Hishigaki H."/>
            <person name="Watanabe T."/>
            <person name="Sugiyama A."/>
            <person name="Takemoto M."/>
            <person name="Kawakami B."/>
            <person name="Yamazaki M."/>
            <person name="Watanabe K."/>
            <person name="Kumagai A."/>
            <person name="Itakura S."/>
            <person name="Fukuzumi Y."/>
            <person name="Fujimori Y."/>
            <person name="Komiyama M."/>
            <person name="Tashiro H."/>
            <person name="Tanigami A."/>
            <person name="Fujiwara T."/>
            <person name="Ono T."/>
            <person name="Yamada K."/>
            <person name="Fujii Y."/>
            <person name="Ozaki K."/>
            <person name="Hirao M."/>
            <person name="Ohmori Y."/>
            <person name="Kawabata A."/>
            <person name="Hikiji T."/>
            <person name="Kobatake N."/>
            <person name="Inagaki H."/>
            <person name="Ikema Y."/>
            <person name="Okamoto S."/>
            <person name="Okitani R."/>
            <person name="Kawakami T."/>
            <person name="Noguchi S."/>
            <person name="Itoh T."/>
            <person name="Shigeta K."/>
            <person name="Senba T."/>
            <person name="Matsumura K."/>
            <person name="Nakajima Y."/>
            <person name="Mizuno T."/>
            <person name="Morinaga M."/>
            <person name="Sasaki M."/>
            <person name="Togashi T."/>
            <person name="Oyama M."/>
            <person name="Hata H."/>
            <person name="Watanabe M."/>
            <person name="Komatsu T."/>
            <person name="Mizushima-Sugano J."/>
            <person name="Satoh T."/>
            <person name="Shirai Y."/>
            <person name="Takahashi Y."/>
            <person name="Nakagawa K."/>
            <person name="Okumura K."/>
            <person name="Nagase T."/>
            <person name="Nomura N."/>
            <person name="Kikuchi H."/>
            <person name="Masuho Y."/>
            <person name="Yamashita R."/>
            <person name="Nakai K."/>
            <person name="Yada T."/>
            <person name="Nakamura Y."/>
            <person name="Ohara O."/>
            <person name="Isogai T."/>
            <person name="Sugano S."/>
        </authorList>
    </citation>
    <scope>NUCLEOTIDE SEQUENCE [LARGE SCALE MRNA] (ISOFORM 1)</scope>
    <source>
        <tissue>Cerebellum</tissue>
    </source>
</reference>
<reference key="11">
    <citation type="submission" date="2005-04" db="EMBL/GenBank/DDBJ databases">
        <authorList>
            <person name="Suzuki Y."/>
            <person name="Sugano S."/>
            <person name="Totoki Y."/>
            <person name="Toyoda A."/>
            <person name="Takeda T."/>
            <person name="Sakaki Y."/>
            <person name="Tanaka A."/>
            <person name="Yokoyama S."/>
        </authorList>
    </citation>
    <scope>NUCLEOTIDE SEQUENCE [LARGE SCALE MRNA] (ISOFORM 1)</scope>
    <source>
        <tissue>Adipose tissue</tissue>
        <tissue>Coronary artery</tissue>
    </source>
</reference>
<reference key="12">
    <citation type="journal article" date="2008" name="Nat. Methods">
        <title>Human protein factory for converting the transcriptome into an in vitro-expressed proteome.</title>
        <authorList>
            <person name="Goshima N."/>
            <person name="Kawamura Y."/>
            <person name="Fukumoto A."/>
            <person name="Miura A."/>
            <person name="Honma R."/>
            <person name="Satoh R."/>
            <person name="Wakamatsu A."/>
            <person name="Yamamoto J."/>
            <person name="Kimura K."/>
            <person name="Nishikawa T."/>
            <person name="Andoh T."/>
            <person name="Iida Y."/>
            <person name="Ishikawa K."/>
            <person name="Ito E."/>
            <person name="Kagawa N."/>
            <person name="Kaminaga C."/>
            <person name="Kanehori K."/>
            <person name="Kawakami B."/>
            <person name="Kenmochi K."/>
            <person name="Kimura R."/>
            <person name="Kobayashi M."/>
            <person name="Kuroita T."/>
            <person name="Kuwayama H."/>
            <person name="Maruyama Y."/>
            <person name="Matsuo K."/>
            <person name="Minami K."/>
            <person name="Mitsubori M."/>
            <person name="Mori M."/>
            <person name="Morishita R."/>
            <person name="Murase A."/>
            <person name="Nishikawa A."/>
            <person name="Nishikawa S."/>
            <person name="Okamoto T."/>
            <person name="Sakagami N."/>
            <person name="Sakamoto Y."/>
            <person name="Sasaki Y."/>
            <person name="Seki T."/>
            <person name="Sono S."/>
            <person name="Sugiyama A."/>
            <person name="Sumiya T."/>
            <person name="Takayama T."/>
            <person name="Takayama Y."/>
            <person name="Takeda H."/>
            <person name="Togashi T."/>
            <person name="Yahata K."/>
            <person name="Yamada H."/>
            <person name="Yanagisawa Y."/>
            <person name="Endo Y."/>
            <person name="Imamoto F."/>
            <person name="Kisu Y."/>
            <person name="Tanaka S."/>
            <person name="Isogai T."/>
            <person name="Imai J."/>
            <person name="Watanabe S."/>
            <person name="Nomura N."/>
        </authorList>
    </citation>
    <scope>NUCLEOTIDE SEQUENCE [LARGE SCALE MRNA] (ISOFORM 1)</scope>
</reference>
<reference key="13">
    <citation type="journal article" date="2004" name="Genome Res.">
        <title>The status, quality, and expansion of the NIH full-length cDNA project: the Mammalian Gene Collection (MGC).</title>
        <authorList>
            <consortium name="The MGC Project Team"/>
        </authorList>
    </citation>
    <scope>NUCLEOTIDE SEQUENCE [LARGE SCALE MRNA] (ISOFORM 1)</scope>
    <source>
        <tissue>Lung</tissue>
    </source>
</reference>
<reference key="14">
    <citation type="submission" date="2008-12" db="UniProtKB">
        <authorList>
            <person name="Lubec G."/>
            <person name="Afjehi-Sadat L."/>
            <person name="Chen W.-Q."/>
            <person name="Sun Y."/>
        </authorList>
    </citation>
    <scope>PROTEIN SEQUENCE OF 23-33; 65-90; 153-162; 172-182; 318-333; 340-357; 363-372 AND 379-400</scope>
    <scope>IDENTIFICATION BY MASS SPECTROMETRY</scope>
    <source>
        <tissue>Brain</tissue>
        <tissue>Cajal-Retzius cell</tissue>
        <tissue>Fetal brain cortex</tissue>
    </source>
</reference>
<reference key="15">
    <citation type="journal article" date="2000" name="Mol. Cell">
        <title>An ATPase/helicase complex is an essential cofactor for oncogenic transformation by c-Myc.</title>
        <authorList>
            <person name="Wood M.A."/>
            <person name="McMahon S.B."/>
            <person name="Cole M.D."/>
        </authorList>
    </citation>
    <scope>PROTEIN SEQUENCE OF 23-33 AND 77-90</scope>
    <scope>INTERACTION WITH MYC</scope>
    <scope>MUTAGENESIS OF ASP-302</scope>
    <scope>FUNCTION</scope>
</reference>
<reference key="16">
    <citation type="journal article" date="2003" name="J. Biol. Chem.">
        <title>Identification of new subunits of the multiprotein mammalian TRRAP/TIP60-containing histone acetyltransferase complex.</title>
        <authorList>
            <person name="Cai Y."/>
            <person name="Jin J."/>
            <person name="Tomomori-Sato C."/>
            <person name="Sato S."/>
            <person name="Sorokina I."/>
            <person name="Parmely T.J."/>
            <person name="Conaway R.C."/>
            <person name="Conaway J.W."/>
        </authorList>
    </citation>
    <scope>PROTEIN SEQUENCE OF 23-33; 34-46; 77-90; 172-182; 185-201; 340-357 AND 405-418 (ISOFORM 1)</scope>
    <scope>IDENTIFICATION IN NUA4 COMPLEX</scope>
    <scope>IDENTIFICATION BY MASS SPECTROMETRY</scope>
</reference>
<reference key="17">
    <citation type="journal article" date="2000" name="Cell">
        <title>Involvement of the TIP60 histone acetylase complex in DNA repair and apoptosis.</title>
        <authorList>
            <person name="Ikura T."/>
            <person name="Ogryzko V.V."/>
            <person name="Grigoriev M."/>
            <person name="Groisman R."/>
            <person name="Wang J."/>
            <person name="Horikoshi M."/>
            <person name="Scully R."/>
            <person name="Qin J."/>
            <person name="Nakatani Y."/>
        </authorList>
    </citation>
    <scope>PROTEIN SEQUENCE OF 34-46 AND 108-117</scope>
    <scope>IDENTIFICATION IN NUA4 COMPLEX</scope>
    <scope>IDENTIFICATION BY MASS SPECTROMETRY</scope>
</reference>
<reference key="18">
    <citation type="journal article" date="2003" name="Cell Motil. Cytoskeleton">
        <title>The ATP-dependent helicase RUVBL1/TIP49a associates with tubulin during mitosis.</title>
        <authorList>
            <person name="Gartner W."/>
            <person name="Rossbacher J."/>
            <person name="Zierhut B."/>
            <person name="Daneva T."/>
            <person name="Base W."/>
            <person name="Weissel M."/>
            <person name="Waldhausl W."/>
            <person name="Pasternack M.S."/>
            <person name="Wagner L."/>
        </authorList>
    </citation>
    <scope>PROTEIN SEQUENCE OF 34-46</scope>
    <scope>FUNCTION</scope>
    <scope>INTERACTION WITH TUBULIN</scope>
    <scope>SUBCELLULAR LOCATION</scope>
    <source>
        <tissue>Monocyte</tissue>
    </source>
</reference>
<reference key="19">
    <citation type="journal article" date="1999" name="J. Biol. Chem.">
        <title>TIP49b, a new RuvB-like DNA helicase, is included in a complex together with another RuvB-like DNA helicase, TIP49a.</title>
        <authorList>
            <person name="Kanemaki M."/>
            <person name="Kurokawa Y."/>
            <person name="Matsu-ura T."/>
            <person name="Makino Y."/>
            <person name="Masani A."/>
            <person name="Okazaki K."/>
            <person name="Morishita T."/>
            <person name="Tamura T.-A."/>
        </authorList>
    </citation>
    <scope>INTERACTION WITH RUVBL2</scope>
</reference>
<reference key="20">
    <citation type="journal article" date="2000" name="EMBO J.">
        <title>Pontin52 and reptin52 function as antagonistic regulators of beta-catenin signalling activity.</title>
        <authorList>
            <person name="Bauer A."/>
            <person name="Chauvet S."/>
            <person name="Huber O."/>
            <person name="Usseglio F."/>
            <person name="Rothbaecher U."/>
            <person name="Aragnol D."/>
            <person name="Kemler R."/>
            <person name="Pradel J."/>
        </authorList>
    </citation>
    <scope>FUNCTION</scope>
</reference>
<reference key="21">
    <citation type="journal article" date="2002" name="Mol. Cell. Biol.">
        <title>BAF53 forms distinct nuclear complexes and functions as a critical c-Myc-interacting nuclear cofactor for oncogenic transformation.</title>
        <authorList>
            <person name="Park J."/>
            <person name="Wood M.A."/>
            <person name="Cole M.D."/>
        </authorList>
    </citation>
    <scope>IDENTIFICATION IN BAF53 COMPLEX WITH ACTL6A; SMARCA2 AND TRRAP</scope>
</reference>
<reference key="22">
    <citation type="journal article" date="2003" name="Cancer Res.">
        <title>TIP49 regulates beta-catenin-mediated neoplastic transformation and T-cell factor target gene induction via effects on chromatin remodeling.</title>
        <authorList>
            <person name="Feng Y."/>
            <person name="Lee N."/>
            <person name="Fearon E.R."/>
        </authorList>
    </citation>
    <scope>FUNCTION</scope>
    <scope>MUTAGENESIS OF ASP-302</scope>
</reference>
<reference key="23">
    <citation type="journal article" date="2004" name="Mol. Cell. Biol.">
        <title>Structural and functional conservation of the NuA4 histone acetyltransferase complex from yeast to humans.</title>
        <authorList>
            <person name="Doyon Y."/>
            <person name="Selleck W."/>
            <person name="Lane W.S."/>
            <person name="Tan S."/>
            <person name="Cote J."/>
        </authorList>
    </citation>
    <scope>FUNCTION</scope>
    <scope>IDENTIFICATION BY MASS SPECTROMETRY</scope>
    <scope>IDENTIFICATION IN NUA4 COMPLEX</scope>
    <scope>IDENTIFICATION IN A NUA4-RELATED SRCAP-CONTAINING COMPLEX</scope>
</reference>
<reference key="24">
    <citation type="journal article" date="2005" name="Cell">
        <title>Physical association and coordinate function of the H3 K4 methyltransferase MLL1 and the H4 K16 acetyltransferase MOF.</title>
        <authorList>
            <person name="Dou Y."/>
            <person name="Milne T.A."/>
            <person name="Tackett A.J."/>
            <person name="Smith E.R."/>
            <person name="Fukuda A."/>
            <person name="Wysocka J."/>
            <person name="Allis C.D."/>
            <person name="Chait B.T."/>
            <person name="Hess J.L."/>
            <person name="Roeder R.G."/>
        </authorList>
    </citation>
    <scope>IDENTIFICATION IN THE MLL1/MLL COMPLEX</scope>
</reference>
<reference key="25">
    <citation type="journal article" date="2005" name="J. Biol. Chem.">
        <title>A mammalian chromatin remodeling complex with similarities to the yeast INO80 complex.</title>
        <authorList>
            <person name="Jin J."/>
            <person name="Cai Y."/>
            <person name="Yao T."/>
            <person name="Gottschalk A.J."/>
            <person name="Florens L."/>
            <person name="Swanson S.K."/>
            <person name="Gutierrez J.L."/>
            <person name="Coleman M.K."/>
            <person name="Workman J.L."/>
            <person name="Mushegian A."/>
            <person name="Washburn M.P."/>
            <person name="Conaway R.C."/>
            <person name="Conaway J.W."/>
        </authorList>
    </citation>
    <scope>IDENTIFICATION IN THE INO80 COMPLEX</scope>
    <scope>IDENTIFICATION BY MASS SPECTROMETRY</scope>
    <scope>FUNCTION</scope>
</reference>
<reference key="26">
    <citation type="journal article" date="2005" name="J. Cell Sci.">
        <title>The histidine triad protein Hint1 interacts with Pontin and Reptin and inhibits TCF-beta-catenin-mediated transcription.</title>
        <authorList>
            <person name="Weiske J."/>
            <person name="Huber O."/>
        </authorList>
    </citation>
    <scope>INTERACTION WITH HINT1</scope>
    <scope>FUNCTION</scope>
    <scope>SUBCELLULAR LOCATION</scope>
</reference>
<reference key="27">
    <citation type="journal article" date="2007" name="J. Mol. Biol.">
        <title>Dodecameric structure and ATPase activity of the human TIP48/TIP49 complex.</title>
        <authorList>
            <person name="Puri T."/>
            <person name="Wendler P."/>
            <person name="Sigala B."/>
            <person name="Saibil H."/>
            <person name="Tsaneva I.R."/>
        </authorList>
    </citation>
    <scope>SUBUNIT</scope>
    <scope>FUNCTION</scope>
    <scope>CATALYTIC ACTIVITY</scope>
    <scope>MUTAGENESIS OF ASP-302</scope>
    <scope>ELECTRON MICROSCOPY OF THE RUVBL1-RUVBL2 HETEROMER</scope>
</reference>
<reference key="28">
    <citation type="journal article" date="2007" name="Mol. Biol. Cell">
        <title>Functional characterization of the OFD1 protein reveals a nuclear localization and physical interaction with subunits of a chromatin remodeling complex.</title>
        <authorList>
            <person name="Giorgio G."/>
            <person name="Alfieri M."/>
            <person name="Prattichizzo C."/>
            <person name="Zullo A."/>
            <person name="Cairo S."/>
            <person name="Franco B."/>
        </authorList>
    </citation>
    <scope>INTERACTION WITH OFD1</scope>
</reference>
<reference key="29">
    <citation type="journal article" date="2007" name="Mol. Cell. Biol.">
        <title>A dynamic scaffold of pre-snoRNP factors facilitates human box C/D snoRNP assembly.</title>
        <authorList>
            <person name="McKeegan K.S."/>
            <person name="Debieux C.M."/>
            <person name="Boulon S."/>
            <person name="Bertrand E."/>
            <person name="Watkins N.J."/>
        </authorList>
    </citation>
    <scope>INTERACTION WITH PIH1D1</scope>
</reference>
<reference key="30">
    <citation type="journal article" date="2007" name="Nat. Struct. Mol. Biol.">
        <title>A YY1-INO80 complex regulates genomic stability through homologous recombination-based repair.</title>
        <authorList>
            <person name="Wu S."/>
            <person name="Shi Y."/>
            <person name="Mulligan P."/>
            <person name="Gay F."/>
            <person name="Landry J."/>
            <person name="Liu H."/>
            <person name="Lu J."/>
            <person name="Qi H.H."/>
            <person name="Wang W."/>
            <person name="Nickoloff J.A."/>
            <person name="Wu C."/>
            <person name="Shi Y."/>
        </authorList>
    </citation>
    <scope>IDENTIFICATION IN THE INO80 COMPLEX</scope>
    <scope>PROTEIN INTERACTION</scope>
</reference>
<reference key="31">
    <citation type="journal article" date="2008" name="Mol. Cell. Biol.">
        <title>Transcriptional activation of histone genes requires NPAT-dependent recruitment of TRRAP-Tip60 complex to histone promoters during the G1/S phase transition.</title>
        <authorList>
            <person name="DeRan M."/>
            <person name="Pulvino M."/>
            <person name="Greene E."/>
            <person name="Su C."/>
            <person name="Zhao J."/>
        </authorList>
    </citation>
    <scope>IDENTIFICATION BY MASS SPECTROMETRY</scope>
    <scope>INTERACTION WITH NPAT</scope>
</reference>
<reference key="32">
    <citation type="journal article" date="2009" name="Hum. Mol. Genet.">
        <title>Biochemical and genetic evidence for a role of IGHMBP2 in the translational machinery.</title>
        <authorList>
            <person name="de Planell-Saguer M."/>
            <person name="Schroeder D.G."/>
            <person name="Rodicio M.C."/>
            <person name="Cox G.A."/>
            <person name="Mourelatos Z."/>
        </authorList>
    </citation>
    <scope>INTERACTION WITH IGHMBP2</scope>
</reference>
<reference key="33">
    <citation type="journal article" date="2009" name="Science">
        <title>Lysine acetylation targets protein complexes and co-regulates major cellular functions.</title>
        <authorList>
            <person name="Choudhary C."/>
            <person name="Kumar C."/>
            <person name="Gnad F."/>
            <person name="Nielsen M.L."/>
            <person name="Rehman M."/>
            <person name="Walther T.C."/>
            <person name="Olsen J.V."/>
            <person name="Mann M."/>
        </authorList>
    </citation>
    <scope>ACETYLATION [LARGE SCALE ANALYSIS] AT LYS-453</scope>
    <scope>IDENTIFICATION BY MASS SPECTROMETRY [LARGE SCALE ANALYSIS]</scope>
</reference>
<reference key="34">
    <citation type="journal article" date="2010" name="Mol. Cell">
        <title>CK2 phospho-dependent binding of R2TP complex to TEL2 is essential for mTOR and SMG1 stability.</title>
        <authorList>
            <person name="Horejsi Z."/>
            <person name="Takai H."/>
            <person name="Adelman C.A."/>
            <person name="Collis S.J."/>
            <person name="Flynn H."/>
            <person name="Maslen S."/>
            <person name="Skehel J.M."/>
            <person name="de Lange T."/>
            <person name="Boulton S.J."/>
        </authorList>
    </citation>
    <scope>IDENTIFICATION IN THE R2TP COMPLEX</scope>
</reference>
<reference key="35">
    <citation type="journal article" date="2011" name="BMC Syst. Biol.">
        <title>Initial characterization of the human central proteome.</title>
        <authorList>
            <person name="Burkard T.R."/>
            <person name="Planyavsky M."/>
            <person name="Kaupe I."/>
            <person name="Breitwieser F.P."/>
            <person name="Buerckstuemmer T."/>
            <person name="Bennett K.L."/>
            <person name="Superti-Furga G."/>
            <person name="Colinge J."/>
        </authorList>
    </citation>
    <scope>IDENTIFICATION BY MASS SPECTROMETRY [LARGE SCALE ANALYSIS]</scope>
</reference>
<reference key="36">
    <citation type="journal article" date="2011" name="J. Biol. Chem.">
        <title>Subunit organization of the human INO80 chromatin remodeling complex: An evolutionarily conserved core complex catalyzes ATP-dependent nucleosome remodeling.</title>
        <authorList>
            <person name="Chen L."/>
            <person name="Cai Y."/>
            <person name="Jin J."/>
            <person name="Florens L."/>
            <person name="Swanson S.K."/>
            <person name="Washburn M.P."/>
            <person name="Conaway J.W."/>
            <person name="Conaway R.C."/>
        </authorList>
    </citation>
    <scope>IDENTIFICATION IN THE INO80 COMPLEX</scope>
    <scope>FUNCTION</scope>
</reference>
<reference key="37">
    <citation type="journal article" date="2012" name="Proc. Natl. Acad. Sci. U.S.A.">
        <title>N-terminal acetylome analyses and functional insights of the N-terminal acetyltransferase NatB.</title>
        <authorList>
            <person name="Van Damme P."/>
            <person name="Lasa M."/>
            <person name="Polevoda B."/>
            <person name="Gazquez C."/>
            <person name="Elosegui-Artola A."/>
            <person name="Kim D.S."/>
            <person name="De Juan-Pardo E."/>
            <person name="Demeyer K."/>
            <person name="Hole K."/>
            <person name="Larrea E."/>
            <person name="Timmerman E."/>
            <person name="Prieto J."/>
            <person name="Arnesen T."/>
            <person name="Sherman F."/>
            <person name="Gevaert K."/>
            <person name="Aldabe R."/>
        </authorList>
    </citation>
    <scope>IDENTIFICATION BY MASS SPECTROMETRY [LARGE SCALE ANALYSIS]</scope>
</reference>
<reference key="38">
    <citation type="journal article" date="2013" name="Genes Dev.">
        <title>USP49 deubiquitinates histone H2B and regulates cotranscriptional pre-mRNA splicing.</title>
        <authorList>
            <person name="Zhang Z."/>
            <person name="Jones A."/>
            <person name="Joo H.Y."/>
            <person name="Zhou D."/>
            <person name="Cao Y."/>
            <person name="Chen S."/>
            <person name="Erdjument-Bromage H."/>
            <person name="Renfrow M."/>
            <person name="He H."/>
            <person name="Tempst P."/>
            <person name="Townes T.M."/>
            <person name="Giles K.E."/>
            <person name="Ma L."/>
            <person name="Wang H."/>
        </authorList>
    </citation>
    <scope>IDENTIFICATION IN A COMPLEX WITH USP49 AND PSMC5</scope>
</reference>
<reference key="39">
    <citation type="journal article" date="2014" name="Elife">
        <title>LINKIN, a new transmembrane protein necessary for cell adhesion.</title>
        <authorList>
            <person name="Kato M."/>
            <person name="Chou T.F."/>
            <person name="Yu C.Z."/>
            <person name="DeModena J."/>
            <person name="Sternberg P.W."/>
        </authorList>
    </citation>
    <scope>INTERACTION WITH ITFG1</scope>
</reference>
<reference key="40">
    <citation type="journal article" date="2014" name="Nat. Struct. Mol. Biol.">
        <title>Uncovering global SUMOylation signaling networks in a site-specific manner.</title>
        <authorList>
            <person name="Hendriks I.A."/>
            <person name="D'Souza R.C."/>
            <person name="Yang B."/>
            <person name="Verlaan-de Vries M."/>
            <person name="Mann M."/>
            <person name="Vertegaal A.C."/>
        </authorList>
    </citation>
    <scope>SUMOYLATION [LARGE SCALE ANALYSIS] AT LYS-2</scope>
    <scope>IDENTIFICATION BY MASS SPECTROMETRY [LARGE SCALE ANALYSIS]</scope>
</reference>
<reference key="41">
    <citation type="journal article" date="2014" name="Nature">
        <title>ANP32E is a histone chaperone that removes H2A.Z from chromatin.</title>
        <authorList>
            <person name="Obri A."/>
            <person name="Ouararhni K."/>
            <person name="Papin C."/>
            <person name="Diebold M.L."/>
            <person name="Padmanabhan K."/>
            <person name="Marek M."/>
            <person name="Stoll I."/>
            <person name="Roy L."/>
            <person name="Reilly P.T."/>
            <person name="Mak T.W."/>
            <person name="Dimitrov S."/>
            <person name="Romier C."/>
            <person name="Hamiche A."/>
        </authorList>
    </citation>
    <scope>FUNCTION</scope>
    <scope>IDENTIFICATION IN THE SWR1-LIKE COMPLEX</scope>
</reference>
<reference key="42">
    <citation type="journal article" date="2014" name="Proc. Natl. Acad. Sci. U.S.A.">
        <title>Mapping of SUMO sites and analysis of SUMOylation changes induced by external stimuli.</title>
        <authorList>
            <person name="Impens F."/>
            <person name="Radoshevich L."/>
            <person name="Cossart P."/>
            <person name="Ribet D."/>
        </authorList>
    </citation>
    <scope>SUMOYLATION [LARGE SCALE ANALYSIS] AT LYS-225</scope>
    <scope>IDENTIFICATION BY MASS SPECTROMETRY [LARGE SCALE ANALYSIS]</scope>
</reference>
<reference key="43">
    <citation type="journal article" date="2015" name="Mol. Cell. Proteomics">
        <title>System-wide analysis of SUMOylation dynamics in response to replication stress reveals novel small ubiquitin-like modified target proteins and acceptor lysines relevant for genome stability.</title>
        <authorList>
            <person name="Xiao Z."/>
            <person name="Chang J.G."/>
            <person name="Hendriks I.A."/>
            <person name="Sigurdsson J.O."/>
            <person name="Olsen J.V."/>
            <person name="Vertegaal A.C."/>
        </authorList>
    </citation>
    <scope>SUMOYLATION [LARGE SCALE ANALYSIS] AT LYS-2</scope>
    <scope>IDENTIFICATION BY MASS SPECTROMETRY [LARGE SCALE ANALYSIS]</scope>
</reference>
<reference key="44">
    <citation type="journal article" date="2015" name="Proteomics">
        <title>N-terminome analysis of the human mitochondrial proteome.</title>
        <authorList>
            <person name="Vaca Jacome A.S."/>
            <person name="Rabilloud T."/>
            <person name="Schaeffer-Reiss C."/>
            <person name="Rompais M."/>
            <person name="Ayoub D."/>
            <person name="Lane L."/>
            <person name="Bairoch A."/>
            <person name="Van Dorsselaer A."/>
            <person name="Carapito C."/>
        </authorList>
    </citation>
    <scope>IDENTIFICATION BY MASS SPECTROMETRY [LARGE SCALE ANALYSIS]</scope>
</reference>
<reference key="45">
    <citation type="journal article" date="2016" name="Dev. Cell">
        <title>WAC regulates mTOR activity by acting as an adaptor for the TTT and Pontin/Reptin complexes.</title>
        <authorList>
            <person name="David-Morrison G."/>
            <person name="Xu Z."/>
            <person name="Rui Y.N."/>
            <person name="Charng W.L."/>
            <person name="Jaiswal M."/>
            <person name="Yamamoto S."/>
            <person name="Xiong B."/>
            <person name="Zhang K."/>
            <person name="Sandoval H."/>
            <person name="Duraine L."/>
            <person name="Zuo Z."/>
            <person name="Zhang S."/>
            <person name="Bellen H.J."/>
        </authorList>
    </citation>
    <scope>INTERACTION WITH WAC</scope>
</reference>
<reference key="46">
    <citation type="journal article" date="2017" name="Nat. Commun.">
        <title>R2TP/Prefoldin-like component RUVBL1/RUVBL2 directly interacts with ZNHIT2 to regulate assembly of U5 small nuclear ribonucleoprotein.</title>
        <authorList>
            <person name="Cloutier P."/>
            <person name="Poitras C."/>
            <person name="Durand M."/>
            <person name="Hekmat O."/>
            <person name="Fiola-Masson E."/>
            <person name="Bouchard A."/>
            <person name="Faubert D."/>
            <person name="Chabot B."/>
            <person name="Coulombe B."/>
        </authorList>
    </citation>
    <scope>INTERACTION WITH ZNHIT1; ZNHIT3; ZNHIT6 AND DDX59</scope>
</reference>
<reference key="47">
    <citation type="journal article" date="2017" name="Nat. Struct. Mol. Biol.">
        <title>Site-specific mapping of the human SUMO proteome reveals co-modification with phosphorylation.</title>
        <authorList>
            <person name="Hendriks I.A."/>
            <person name="Lyon D."/>
            <person name="Young C."/>
            <person name="Jensen L.J."/>
            <person name="Vertegaal A.C."/>
            <person name="Nielsen M.L."/>
        </authorList>
    </citation>
    <scope>SUMOYLATION [LARGE SCALE ANALYSIS] AT LYS-2; LYS-225 AND LYS-445</scope>
    <scope>IDENTIFICATION BY MASS SPECTROMETRY [LARGE SCALE ANALYSIS]</scope>
</reference>
<reference key="48">
    <citation type="journal article" date="2019" name="PLoS Pathog.">
        <title>The R2TP complex regulates paramyxovirus RNA synthesis.</title>
        <authorList>
            <person name="Katoh H."/>
            <person name="Sekizuka T."/>
            <person name="Nakatsu Y."/>
            <person name="Nakagawa R."/>
            <person name="Nao N."/>
            <person name="Sakata M."/>
            <person name="Kato F."/>
            <person name="Kuroda M."/>
            <person name="Kidokoro M."/>
            <person name="Takeda M."/>
        </authorList>
    </citation>
    <scope>INTERACTION WITH MUMPS VIRUS L POLYMERASE (MICROBIAL INFECTION)</scope>
</reference>
<reference key="49">
    <citation type="journal article" date="2020" name="J. Proteome Res.">
        <title>Upstream ORF-Encoded ASDURF Is a Novel Prefoldin-like Subunit of the PAQosome.</title>
        <authorList>
            <person name="Cloutier P."/>
            <person name="Poitras C."/>
            <person name="Faubert D."/>
            <person name="Bouchard A."/>
            <person name="Blanchette M."/>
            <person name="Gauthier M.S."/>
            <person name="Coulombe B."/>
        </authorList>
    </citation>
    <scope>IDENTIFICATION IN THE PAQOSOME COMPLEX</scope>
    <scope>IDENTIFICATION BY MASS SPECTROMETRY</scope>
</reference>
<reference key="50">
    <citation type="journal article" date="2021" name="Nucleic Acids Res.">
        <title>NOPCHAP1 is a PAQosome cofactor that helps loading NOP58 on RUVBL1/2 during box C/D snoRNP biogenesis.</title>
        <authorList>
            <person name="Abel Y."/>
            <person name="Paiva A.C.F."/>
            <person name="Bizarro J."/>
            <person name="Chagot M.E."/>
            <person name="Santo P.E."/>
            <person name="Robert M.C."/>
            <person name="Quinternet M."/>
            <person name="Vandermoere F."/>
            <person name="Sousa P.M.F."/>
            <person name="Fort P."/>
            <person name="Charpentier B."/>
            <person name="Manival X."/>
            <person name="Bandeiras T.M."/>
            <person name="Bertrand E."/>
            <person name="Verheggen C."/>
        </authorList>
    </citation>
    <scope>INTERACTION WITH NOPCHAP1</scope>
    <scope>MUTAGENESIS OF LYS-76 AND GLU-303</scope>
</reference>
<reference key="51">
    <citation type="journal article" date="2022" name="Nucleic Acids Res.">
        <title>Human NOP2/NSUN1 regulates ribosome biogenesis through non-catalytic complex formation with box C/D snoRNPs.</title>
        <authorList>
            <person name="Liao H."/>
            <person name="Gaur A."/>
            <person name="McConie H."/>
            <person name="Shekar A."/>
            <person name="Wang K."/>
            <person name="Chang J.T."/>
            <person name="Breton G."/>
            <person name="Denicourt C."/>
        </authorList>
    </citation>
    <scope>INTERACTION WITH NOP2; NOP56 AND NUFIP1</scope>
</reference>
<reference key="52">
    <citation type="journal article" date="2006" name="J. Biol. Chem.">
        <title>Crystal structure of the human AAA+ protein RuvBL1.</title>
        <authorList>
            <person name="Matias P.M."/>
            <person name="Gorynia S."/>
            <person name="Donner P."/>
            <person name="Carrondo M.A."/>
        </authorList>
    </citation>
    <scope>X-RAY CRYSTALLOGRAPHY (2.2 ANGSTROMS)</scope>
    <scope>SUBUNIT</scope>
    <scope>MUTAGENESIS OF ASP-302</scope>
</reference>
<reference evidence="38" key="53">
    <citation type="journal article" date="2020" name="Elife">
        <title>Regulation of RUVBL1-RUVBL2 AAA-ATPases by the nonsense-mediated mRNA decay factor DHX34, as evidenced by Cryo-EM.</title>
        <authorList>
            <person name="Lopez-Perrote A."/>
            <person name="Hug N."/>
            <person name="Gonzalez-Corpas A."/>
            <person name="Rodriguez C.F."/>
            <person name="Serna M."/>
            <person name="Garcia-Martin C."/>
            <person name="Boskovic J."/>
            <person name="Fernandez-Leiro R."/>
            <person name="Caceres J.F."/>
            <person name="Llorca O."/>
        </authorList>
    </citation>
    <scope>STRUCTURE BY ELECTRON MICROSCOPY (4.18 ANGSTROMS) IN COMPLEX WITH RUVBL2</scope>
    <scope>FUNCTION</scope>
    <scope>SUBUNIT</scope>
    <scope>INTERACTION WITH SMG1 AND DHX34</scope>
    <scope>MUTAGENESIS OF GLU-303</scope>
</reference>
<accession>Q9Y265</accession>
<accession>B2R5S0</accession>
<accession>P82276</accession>
<accession>Q1KMR0</accession>
<accession>Q53HK5</accession>
<accession>Q53HL7</accession>
<accession>Q53Y27</accession>
<accession>Q9BSX9</accession>
<sequence length="456" mass="50228">MKIEEVKSTTKTQRIASHSHVKGLGLDESGLAKQAASGLVGQENAREACGVIVELIKSKKMAGRAVLLAGPPGTGKTALALAIAQELGSKVPFCPMVGSEVYSTEIKKTEVLMENFRRAIGLRIKETKEVYEGEVTELTPCETENPMGGYGKTISHVIIGLKTAKGTKQLKLDPSIFESLQKERVEAGDVIYIEANSGAVKRQGRCDTYATEFDLEAEEYVPLPKGDVHKKKEIIQDVTLHDLDVANARPQGGQDILSMMGQLMKPKKTEITDKLRGEINKVVNKYIDQGIAELVPGVLFVDEVHMLDIECFTYLHRALESSIAPIVIFASNRGNCVIRGTEDITSPHGIPLDLLDRVMIIRTMLYTPQEMKQIIKIRAQTEGINISEEALNHLGEIGTKTTLRYSVQLLTPANLLAKINGKDSIEKEHVEEISELFYDAKSSAKILADQQDKYMK</sequence>
<evidence type="ECO:0000250" key="1"/>
<evidence type="ECO:0000250" key="2">
    <source>
        <dbReference type="UniProtKB" id="Q9DE26"/>
    </source>
</evidence>
<evidence type="ECO:0000269" key="3">
    <source>
    </source>
</evidence>
<evidence type="ECO:0000269" key="4">
    <source>
    </source>
</evidence>
<evidence type="ECO:0000269" key="5">
    <source>
    </source>
</evidence>
<evidence type="ECO:0000269" key="6">
    <source>
    </source>
</evidence>
<evidence type="ECO:0000269" key="7">
    <source>
    </source>
</evidence>
<evidence type="ECO:0000269" key="8">
    <source>
    </source>
</evidence>
<evidence type="ECO:0000269" key="9">
    <source>
    </source>
</evidence>
<evidence type="ECO:0000269" key="10">
    <source>
    </source>
</evidence>
<evidence type="ECO:0000269" key="11">
    <source>
    </source>
</evidence>
<evidence type="ECO:0000269" key="12">
    <source>
    </source>
</evidence>
<evidence type="ECO:0000269" key="13">
    <source>
    </source>
</evidence>
<evidence type="ECO:0000269" key="14">
    <source>
    </source>
</evidence>
<evidence type="ECO:0000269" key="15">
    <source>
    </source>
</evidence>
<evidence type="ECO:0000269" key="16">
    <source>
    </source>
</evidence>
<evidence type="ECO:0000269" key="17">
    <source>
    </source>
</evidence>
<evidence type="ECO:0000269" key="18">
    <source>
    </source>
</evidence>
<evidence type="ECO:0000269" key="19">
    <source>
    </source>
</evidence>
<evidence type="ECO:0000269" key="20">
    <source>
    </source>
</evidence>
<evidence type="ECO:0000269" key="21">
    <source>
    </source>
</evidence>
<evidence type="ECO:0000269" key="22">
    <source>
    </source>
</evidence>
<evidence type="ECO:0000269" key="23">
    <source>
    </source>
</evidence>
<evidence type="ECO:0000269" key="24">
    <source>
    </source>
</evidence>
<evidence type="ECO:0000269" key="25">
    <source>
    </source>
</evidence>
<evidence type="ECO:0000269" key="26">
    <source>
    </source>
</evidence>
<evidence type="ECO:0000269" key="27">
    <source>
    </source>
</evidence>
<evidence type="ECO:0000269" key="28">
    <source>
    </source>
</evidence>
<evidence type="ECO:0000269" key="29">
    <source>
    </source>
</evidence>
<evidence type="ECO:0000269" key="30">
    <source>
    </source>
</evidence>
<evidence type="ECO:0000269" key="31">
    <source>
    </source>
</evidence>
<evidence type="ECO:0000269" key="32">
    <source>
    </source>
</evidence>
<evidence type="ECO:0000269" key="33">
    <source>
    </source>
</evidence>
<evidence type="ECO:0000303" key="34">
    <source ref="8"/>
</evidence>
<evidence type="ECO:0000305" key="35"/>
<evidence type="ECO:0000305" key="36">
    <source>
    </source>
</evidence>
<evidence type="ECO:0000312" key="37">
    <source>
        <dbReference type="HGNC" id="HGNC:10474"/>
    </source>
</evidence>
<evidence type="ECO:0007744" key="38">
    <source>
        <dbReference type="PDB" id="7AHO"/>
    </source>
</evidence>
<evidence type="ECO:0007744" key="39">
    <source>
    </source>
</evidence>
<evidence type="ECO:0007744" key="40">
    <source>
    </source>
</evidence>
<evidence type="ECO:0007744" key="41">
    <source>
    </source>
</evidence>
<evidence type="ECO:0007744" key="42">
    <source>
    </source>
</evidence>
<evidence type="ECO:0007744" key="43">
    <source>
    </source>
</evidence>
<evidence type="ECO:0007829" key="44">
    <source>
        <dbReference type="PDB" id="2C9O"/>
    </source>
</evidence>
<evidence type="ECO:0007829" key="45">
    <source>
        <dbReference type="PDB" id="2XSZ"/>
    </source>
</evidence>
<evidence type="ECO:0007829" key="46">
    <source>
        <dbReference type="PDB" id="6K0R"/>
    </source>
</evidence>
<evidence type="ECO:0007829" key="47">
    <source>
        <dbReference type="PDB" id="7OLE"/>
    </source>
</evidence>
<evidence type="ECO:0007829" key="48">
    <source>
        <dbReference type="PDB" id="8XVT"/>
    </source>
</evidence>
<evidence type="ECO:0007829" key="49">
    <source>
        <dbReference type="PDB" id="9C57"/>
    </source>
</evidence>
<proteinExistence type="evidence at protein level"/>
<organism>
    <name type="scientific">Homo sapiens</name>
    <name type="common">Human</name>
    <dbReference type="NCBI Taxonomy" id="9606"/>
    <lineage>
        <taxon>Eukaryota</taxon>
        <taxon>Metazoa</taxon>
        <taxon>Chordata</taxon>
        <taxon>Craniata</taxon>
        <taxon>Vertebrata</taxon>
        <taxon>Euteleostomi</taxon>
        <taxon>Mammalia</taxon>
        <taxon>Eutheria</taxon>
        <taxon>Euarchontoglires</taxon>
        <taxon>Primates</taxon>
        <taxon>Haplorrhini</taxon>
        <taxon>Catarrhini</taxon>
        <taxon>Hominidae</taxon>
        <taxon>Homo</taxon>
    </lineage>
</organism>
<feature type="chain" id="PRO_0000165639" description="RuvB-like 1">
    <location>
        <begin position="1"/>
        <end position="456"/>
    </location>
</feature>
<feature type="binding site" evidence="1">
    <location>
        <begin position="70"/>
        <end position="77"/>
    </location>
    <ligand>
        <name>ATP</name>
        <dbReference type="ChEBI" id="CHEBI:30616"/>
    </ligand>
</feature>
<feature type="modified residue" description="N6-acetyllysine" evidence="39">
    <location>
        <position position="453"/>
    </location>
</feature>
<feature type="cross-link" description="Glycyl lysine isopeptide (Lys-Gly) (interchain with G-Cter in SUMO2)" evidence="41 42 43">
    <location>
        <position position="2"/>
    </location>
</feature>
<feature type="cross-link" description="Glycyl lysine isopeptide (Lys-Gly) (interchain with G-Cter in SUMO1); alternate" evidence="40">
    <location>
        <position position="225"/>
    </location>
</feature>
<feature type="cross-link" description="Glycyl lysine isopeptide (Lys-Gly) (interchain with G-Cter in SUMO2); alternate" evidence="43">
    <location>
        <position position="225"/>
    </location>
</feature>
<feature type="cross-link" description="Glycyl lysine isopeptide (Lys-Gly) (interchain with G-Cter in SUMO2)" evidence="43">
    <location>
        <position position="445"/>
    </location>
</feature>
<feature type="splice variant" id="VSP_021387" description="In isoform 2." evidence="34">
    <original>IIKIRAQTEGINI</original>
    <variation>VLSAAADPGQLAC</variation>
    <location>
        <begin position="374"/>
        <end position="386"/>
    </location>
</feature>
<feature type="splice variant" id="VSP_021388" description="In isoform 2." evidence="34">
    <location>
        <begin position="387"/>
        <end position="456"/>
    </location>
</feature>
<feature type="mutagenesis site" description="No effect on interaction with NOPCHAP1." evidence="32">
    <original>K</original>
    <variation>M</variation>
    <location>
        <position position="76"/>
    </location>
</feature>
<feature type="mutagenesis site" description="Abolishes ATPase activity; inhibition of MYC- and CTNNB1-mediated transformation." evidence="4 10 15 16">
    <original>D</original>
    <variation>N</variation>
    <location>
        <position position="302"/>
    </location>
</feature>
<feature type="mutagenesis site" description="Reduces ATPase activity. Decreases interaction with NOPCHAP1. No effect on formation of RUVBL1-RUVBL2 heteromeric complex." evidence="31 32">
    <original>E</original>
    <variation>Q</variation>
    <location>
        <position position="303"/>
    </location>
</feature>
<feature type="sequence conflict" description="In Ref. 12; BAD96283." evidence="35" ref="12">
    <original>I</original>
    <variation>T</variation>
    <location>
        <position position="52"/>
    </location>
</feature>
<feature type="sequence conflict" description="In Ref. 12; BAD96295." evidence="35" ref="12">
    <original>N</original>
    <variation>D</variation>
    <location>
        <position position="145"/>
    </location>
</feature>
<feature type="sequence conflict" description="In Ref. 8; ABF13334." evidence="35" ref="8">
    <original>K</original>
    <variation>R</variation>
    <location>
        <position position="285"/>
    </location>
</feature>
<feature type="sequence conflict" description="In Ref. 8; ABF13334." evidence="35" ref="8">
    <original>D</original>
    <variation>P</variation>
    <location>
        <position position="353"/>
    </location>
</feature>
<feature type="helix" evidence="44">
    <location>
        <begin position="10"/>
        <end position="16"/>
    </location>
</feature>
<feature type="turn" evidence="44">
    <location>
        <begin position="17"/>
        <end position="20"/>
    </location>
</feature>
<feature type="strand" evidence="45">
    <location>
        <begin position="28"/>
        <end position="30"/>
    </location>
</feature>
<feature type="strand" evidence="44">
    <location>
        <begin position="34"/>
        <end position="36"/>
    </location>
</feature>
<feature type="strand" evidence="44">
    <location>
        <begin position="39"/>
        <end position="41"/>
    </location>
</feature>
<feature type="helix" evidence="44">
    <location>
        <begin position="43"/>
        <end position="57"/>
    </location>
</feature>
<feature type="strand" evidence="44">
    <location>
        <begin position="65"/>
        <end position="69"/>
    </location>
</feature>
<feature type="strand" evidence="45">
    <location>
        <begin position="72"/>
        <end position="75"/>
    </location>
</feature>
<feature type="helix" evidence="44">
    <location>
        <begin position="76"/>
        <end position="87"/>
    </location>
</feature>
<feature type="strand" evidence="44">
    <location>
        <begin position="93"/>
        <end position="97"/>
    </location>
</feature>
<feature type="helix" evidence="44">
    <location>
        <begin position="98"/>
        <end position="101"/>
    </location>
</feature>
<feature type="strand" evidence="44">
    <location>
        <begin position="104"/>
        <end position="106"/>
    </location>
</feature>
<feature type="helix" evidence="44">
    <location>
        <begin position="108"/>
        <end position="118"/>
    </location>
</feature>
<feature type="strand" evidence="44">
    <location>
        <begin position="119"/>
        <end position="140"/>
    </location>
</feature>
<feature type="strand" evidence="49">
    <location>
        <begin position="146"/>
        <end position="148"/>
    </location>
</feature>
<feature type="strand" evidence="44">
    <location>
        <begin position="157"/>
        <end position="163"/>
    </location>
</feature>
<feature type="strand" evidence="44">
    <location>
        <begin position="166"/>
        <end position="172"/>
    </location>
</feature>
<feature type="helix" evidence="44">
    <location>
        <begin position="174"/>
        <end position="182"/>
    </location>
</feature>
<feature type="strand" evidence="44">
    <location>
        <begin position="189"/>
        <end position="194"/>
    </location>
</feature>
<feature type="turn" evidence="44">
    <location>
        <begin position="195"/>
        <end position="197"/>
    </location>
</feature>
<feature type="strand" evidence="44">
    <location>
        <begin position="200"/>
        <end position="206"/>
    </location>
</feature>
<feature type="helix" evidence="49">
    <location>
        <begin position="207"/>
        <end position="209"/>
    </location>
</feature>
<feature type="strand" evidence="44">
    <location>
        <begin position="216"/>
        <end position="221"/>
    </location>
</feature>
<feature type="strand" evidence="44">
    <location>
        <begin position="228"/>
        <end position="239"/>
    </location>
</feature>
<feature type="helix" evidence="44">
    <location>
        <begin position="240"/>
        <end position="245"/>
    </location>
</feature>
<feature type="strand" evidence="48">
    <location>
        <begin position="252"/>
        <end position="254"/>
    </location>
</feature>
<feature type="helix" evidence="49">
    <location>
        <begin position="256"/>
        <end position="263"/>
    </location>
</feature>
<feature type="turn" evidence="48">
    <location>
        <begin position="272"/>
        <end position="275"/>
    </location>
</feature>
<feature type="helix" evidence="44">
    <location>
        <begin position="278"/>
        <end position="288"/>
    </location>
</feature>
<feature type="strand" evidence="44">
    <location>
        <begin position="291"/>
        <end position="296"/>
    </location>
</feature>
<feature type="strand" evidence="44">
    <location>
        <begin position="298"/>
        <end position="303"/>
    </location>
</feature>
<feature type="helix" evidence="44">
    <location>
        <begin position="304"/>
        <end position="306"/>
    </location>
</feature>
<feature type="helix" evidence="44">
    <location>
        <begin position="309"/>
        <end position="318"/>
    </location>
</feature>
<feature type="strand" evidence="46">
    <location>
        <begin position="321"/>
        <end position="323"/>
    </location>
</feature>
<feature type="strand" evidence="44">
    <location>
        <begin position="326"/>
        <end position="331"/>
    </location>
</feature>
<feature type="strand" evidence="44">
    <location>
        <begin position="334"/>
        <end position="337"/>
    </location>
</feature>
<feature type="strand" evidence="46">
    <location>
        <begin position="341"/>
        <end position="343"/>
    </location>
</feature>
<feature type="strand" evidence="44">
    <location>
        <begin position="345"/>
        <end position="347"/>
    </location>
</feature>
<feature type="helix" evidence="44">
    <location>
        <begin position="352"/>
        <end position="355"/>
    </location>
</feature>
<feature type="strand" evidence="44">
    <location>
        <begin position="358"/>
        <end position="362"/>
    </location>
</feature>
<feature type="helix" evidence="44">
    <location>
        <begin position="368"/>
        <end position="382"/>
    </location>
</feature>
<feature type="helix" evidence="44">
    <location>
        <begin position="388"/>
        <end position="400"/>
    </location>
</feature>
<feature type="helix" evidence="44">
    <location>
        <begin position="403"/>
        <end position="408"/>
    </location>
</feature>
<feature type="helix" evidence="44">
    <location>
        <begin position="410"/>
        <end position="419"/>
    </location>
</feature>
<feature type="strand" evidence="44">
    <location>
        <begin position="423"/>
        <end position="425"/>
    </location>
</feature>
<feature type="helix" evidence="44">
    <location>
        <begin position="427"/>
        <end position="436"/>
    </location>
</feature>
<feature type="helix" evidence="44">
    <location>
        <begin position="440"/>
        <end position="448"/>
    </location>
</feature>
<feature type="turn" evidence="47">
    <location>
        <begin position="452"/>
        <end position="454"/>
    </location>
</feature>